<keyword id="KW-0002">3D-structure</keyword>
<keyword id="KW-0903">Direct protein sequencing</keyword>
<keyword id="KW-1185">Reference proteome</keyword>
<keyword id="KW-0687">Ribonucleoprotein</keyword>
<keyword id="KW-0689">Ribosomal protein</keyword>
<keyword id="KW-0694">RNA-binding</keyword>
<keyword id="KW-0699">rRNA-binding</keyword>
<dbReference type="EMBL" id="AP008226">
    <property type="protein sequence ID" value="BAD70066.1"/>
    <property type="molecule type" value="Genomic_DNA"/>
</dbReference>
<dbReference type="RefSeq" id="WP_008630522.1">
    <property type="nucleotide sequence ID" value="NC_006461.1"/>
</dbReference>
<dbReference type="RefSeq" id="YP_143509.1">
    <property type="nucleotide sequence ID" value="NC_006461.1"/>
</dbReference>
<dbReference type="PDB" id="1FJG">
    <property type="method" value="X-ray"/>
    <property type="resolution" value="3.00 A"/>
    <property type="chains" value="R=1-88"/>
</dbReference>
<dbReference type="PDB" id="1FKA">
    <property type="method" value="X-ray"/>
    <property type="resolution" value="3.30 A"/>
    <property type="chains" value="R=1-88"/>
</dbReference>
<dbReference type="PDB" id="1G1X">
    <property type="method" value="X-ray"/>
    <property type="resolution" value="2.60 A"/>
    <property type="chains" value="C/H=1-88"/>
</dbReference>
<dbReference type="PDB" id="1HNW">
    <property type="method" value="X-ray"/>
    <property type="resolution" value="3.40 A"/>
    <property type="chains" value="R=1-88"/>
</dbReference>
<dbReference type="PDB" id="1HNX">
    <property type="method" value="X-ray"/>
    <property type="resolution" value="3.40 A"/>
    <property type="chains" value="R=1-88"/>
</dbReference>
<dbReference type="PDB" id="1HNZ">
    <property type="method" value="X-ray"/>
    <property type="resolution" value="3.30 A"/>
    <property type="chains" value="R=1-88"/>
</dbReference>
<dbReference type="PDB" id="1HR0">
    <property type="method" value="X-ray"/>
    <property type="resolution" value="3.20 A"/>
    <property type="chains" value="R=1-88"/>
</dbReference>
<dbReference type="PDB" id="1I94">
    <property type="method" value="X-ray"/>
    <property type="resolution" value="3.20 A"/>
    <property type="chains" value="R=2-88"/>
</dbReference>
<dbReference type="PDB" id="1I95">
    <property type="method" value="X-ray"/>
    <property type="resolution" value="4.50 A"/>
    <property type="chains" value="R=2-88"/>
</dbReference>
<dbReference type="PDB" id="1I96">
    <property type="method" value="X-ray"/>
    <property type="resolution" value="4.20 A"/>
    <property type="chains" value="R=2-88"/>
</dbReference>
<dbReference type="PDB" id="1I97">
    <property type="method" value="X-ray"/>
    <property type="resolution" value="4.50 A"/>
    <property type="chains" value="R=2-88"/>
</dbReference>
<dbReference type="PDB" id="1IBK">
    <property type="method" value="X-ray"/>
    <property type="resolution" value="3.31 A"/>
    <property type="chains" value="R=1-88"/>
</dbReference>
<dbReference type="PDB" id="1IBL">
    <property type="method" value="X-ray"/>
    <property type="resolution" value="3.11 A"/>
    <property type="chains" value="R=1-88"/>
</dbReference>
<dbReference type="PDB" id="1IBM">
    <property type="method" value="X-ray"/>
    <property type="resolution" value="3.31 A"/>
    <property type="chains" value="R=1-88"/>
</dbReference>
<dbReference type="PDB" id="1J5E">
    <property type="method" value="X-ray"/>
    <property type="resolution" value="3.05 A"/>
    <property type="chains" value="R=1-88"/>
</dbReference>
<dbReference type="PDB" id="1JGO">
    <property type="method" value="X-ray"/>
    <property type="resolution" value="5.60 A"/>
    <property type="chains" value="U=1-88"/>
</dbReference>
<dbReference type="PDB" id="1JGP">
    <property type="method" value="X-ray"/>
    <property type="resolution" value="7.00 A"/>
    <property type="chains" value="U=1-88"/>
</dbReference>
<dbReference type="PDB" id="1JGQ">
    <property type="method" value="X-ray"/>
    <property type="resolution" value="5.00 A"/>
    <property type="chains" value="U=1-88"/>
</dbReference>
<dbReference type="PDB" id="1ML5">
    <property type="method" value="EM"/>
    <property type="resolution" value="14.00 A"/>
    <property type="chains" value="U=1-88"/>
</dbReference>
<dbReference type="PDB" id="1N32">
    <property type="method" value="X-ray"/>
    <property type="resolution" value="3.00 A"/>
    <property type="chains" value="R=1-88"/>
</dbReference>
<dbReference type="PDB" id="1N33">
    <property type="method" value="X-ray"/>
    <property type="resolution" value="3.35 A"/>
    <property type="chains" value="R=1-88"/>
</dbReference>
<dbReference type="PDB" id="1N34">
    <property type="method" value="X-ray"/>
    <property type="resolution" value="3.80 A"/>
    <property type="chains" value="R=1-88"/>
</dbReference>
<dbReference type="PDB" id="1N36">
    <property type="method" value="X-ray"/>
    <property type="resolution" value="3.65 A"/>
    <property type="chains" value="R=1-88"/>
</dbReference>
<dbReference type="PDB" id="1VVJ">
    <property type="method" value="X-ray"/>
    <property type="resolution" value="3.44 A"/>
    <property type="chains" value="QR/XR=1-88"/>
</dbReference>
<dbReference type="PDB" id="1VY4">
    <property type="method" value="X-ray"/>
    <property type="resolution" value="2.60 A"/>
    <property type="chains" value="AR/CR=1-88"/>
</dbReference>
<dbReference type="PDB" id="1VY5">
    <property type="method" value="X-ray"/>
    <property type="resolution" value="2.55 A"/>
    <property type="chains" value="AR/CR=1-88"/>
</dbReference>
<dbReference type="PDB" id="1VY6">
    <property type="method" value="X-ray"/>
    <property type="resolution" value="2.90 A"/>
    <property type="chains" value="AR/CR=1-88"/>
</dbReference>
<dbReference type="PDB" id="1VY7">
    <property type="method" value="X-ray"/>
    <property type="resolution" value="2.80 A"/>
    <property type="chains" value="AR/CR=1-88"/>
</dbReference>
<dbReference type="PDB" id="1X18">
    <property type="method" value="EM"/>
    <property type="resolution" value="13.50 A"/>
    <property type="chains" value="H=16-88"/>
</dbReference>
<dbReference type="PDB" id="1XMO">
    <property type="method" value="X-ray"/>
    <property type="resolution" value="3.25 A"/>
    <property type="chains" value="R=1-88"/>
</dbReference>
<dbReference type="PDB" id="1XMQ">
    <property type="method" value="X-ray"/>
    <property type="resolution" value="3.00 A"/>
    <property type="chains" value="R=1-88"/>
</dbReference>
<dbReference type="PDB" id="1XNQ">
    <property type="method" value="X-ray"/>
    <property type="resolution" value="3.05 A"/>
    <property type="chains" value="R=1-88"/>
</dbReference>
<dbReference type="PDB" id="1XNR">
    <property type="method" value="X-ray"/>
    <property type="resolution" value="3.10 A"/>
    <property type="chains" value="R=1-88"/>
</dbReference>
<dbReference type="PDB" id="2E5L">
    <property type="method" value="X-ray"/>
    <property type="resolution" value="3.30 A"/>
    <property type="chains" value="R=2-88"/>
</dbReference>
<dbReference type="PDB" id="2F4V">
    <property type="method" value="X-ray"/>
    <property type="resolution" value="3.80 A"/>
    <property type="chains" value="R=1-88"/>
</dbReference>
<dbReference type="PDB" id="2HHH">
    <property type="method" value="X-ray"/>
    <property type="resolution" value="3.35 A"/>
    <property type="chains" value="R=1-88"/>
</dbReference>
<dbReference type="PDB" id="2UU9">
    <property type="method" value="X-ray"/>
    <property type="resolution" value="3.10 A"/>
    <property type="chains" value="R=2-88"/>
</dbReference>
<dbReference type="PDB" id="2UUA">
    <property type="method" value="X-ray"/>
    <property type="resolution" value="2.90 A"/>
    <property type="chains" value="R=2-88"/>
</dbReference>
<dbReference type="PDB" id="2UUB">
    <property type="method" value="X-ray"/>
    <property type="resolution" value="2.80 A"/>
    <property type="chains" value="R=2-88"/>
</dbReference>
<dbReference type="PDB" id="2UUC">
    <property type="method" value="X-ray"/>
    <property type="resolution" value="3.10 A"/>
    <property type="chains" value="R=2-88"/>
</dbReference>
<dbReference type="PDB" id="2UXB">
    <property type="method" value="X-ray"/>
    <property type="resolution" value="3.10 A"/>
    <property type="chains" value="R=2-88"/>
</dbReference>
<dbReference type="PDB" id="2UXC">
    <property type="method" value="X-ray"/>
    <property type="resolution" value="2.90 A"/>
    <property type="chains" value="R=2-88"/>
</dbReference>
<dbReference type="PDB" id="2UXD">
    <property type="method" value="X-ray"/>
    <property type="resolution" value="3.20 A"/>
    <property type="chains" value="R=2-88"/>
</dbReference>
<dbReference type="PDB" id="2ZM6">
    <property type="method" value="X-ray"/>
    <property type="resolution" value="3.30 A"/>
    <property type="chains" value="R=2-88"/>
</dbReference>
<dbReference type="PDB" id="3OTO">
    <property type="method" value="X-ray"/>
    <property type="resolution" value="3.69 A"/>
    <property type="chains" value="R=1-88"/>
</dbReference>
<dbReference type="PDB" id="3T1H">
    <property type="method" value="X-ray"/>
    <property type="resolution" value="3.11 A"/>
    <property type="chains" value="R=1-88"/>
</dbReference>
<dbReference type="PDB" id="3T1Y">
    <property type="method" value="X-ray"/>
    <property type="resolution" value="2.80 A"/>
    <property type="chains" value="R=1-88"/>
</dbReference>
<dbReference type="PDB" id="4AQY">
    <property type="method" value="X-ray"/>
    <property type="resolution" value="3.50 A"/>
    <property type="chains" value="R=1-88"/>
</dbReference>
<dbReference type="PDB" id="4B3M">
    <property type="method" value="X-ray"/>
    <property type="resolution" value="2.90 A"/>
    <property type="chains" value="R=1-88"/>
</dbReference>
<dbReference type="PDB" id="4B3R">
    <property type="method" value="X-ray"/>
    <property type="resolution" value="3.00 A"/>
    <property type="chains" value="R=1-88"/>
</dbReference>
<dbReference type="PDB" id="4B3S">
    <property type="method" value="X-ray"/>
    <property type="resolution" value="3.15 A"/>
    <property type="chains" value="R=1-88"/>
</dbReference>
<dbReference type="PDB" id="4B3T">
    <property type="method" value="X-ray"/>
    <property type="resolution" value="3.00 A"/>
    <property type="chains" value="R=1-88"/>
</dbReference>
<dbReference type="PDB" id="4DR1">
    <property type="method" value="X-ray"/>
    <property type="resolution" value="3.60 A"/>
    <property type="chains" value="R=1-88"/>
</dbReference>
<dbReference type="PDB" id="4DR2">
    <property type="method" value="X-ray"/>
    <property type="resolution" value="3.25 A"/>
    <property type="chains" value="R=1-88"/>
</dbReference>
<dbReference type="PDB" id="4DR3">
    <property type="method" value="X-ray"/>
    <property type="resolution" value="3.35 A"/>
    <property type="chains" value="R=1-88"/>
</dbReference>
<dbReference type="PDB" id="4DR4">
    <property type="method" value="X-ray"/>
    <property type="resolution" value="3.97 A"/>
    <property type="chains" value="R=1-88"/>
</dbReference>
<dbReference type="PDB" id="4DR5">
    <property type="method" value="X-ray"/>
    <property type="resolution" value="3.45 A"/>
    <property type="chains" value="R=1-88"/>
</dbReference>
<dbReference type="PDB" id="4DR6">
    <property type="method" value="X-ray"/>
    <property type="resolution" value="3.30 A"/>
    <property type="chains" value="R=1-88"/>
</dbReference>
<dbReference type="PDB" id="4DR7">
    <property type="method" value="X-ray"/>
    <property type="resolution" value="3.75 A"/>
    <property type="chains" value="R=1-88"/>
</dbReference>
<dbReference type="PDB" id="4DUY">
    <property type="method" value="X-ray"/>
    <property type="resolution" value="3.39 A"/>
    <property type="chains" value="R=1-88"/>
</dbReference>
<dbReference type="PDB" id="4DUZ">
    <property type="method" value="X-ray"/>
    <property type="resolution" value="3.65 A"/>
    <property type="chains" value="R=1-88"/>
</dbReference>
<dbReference type="PDB" id="4DV0">
    <property type="method" value="X-ray"/>
    <property type="resolution" value="3.85 A"/>
    <property type="chains" value="R=1-88"/>
</dbReference>
<dbReference type="PDB" id="4DV1">
    <property type="method" value="X-ray"/>
    <property type="resolution" value="3.85 A"/>
    <property type="chains" value="R=1-88"/>
</dbReference>
<dbReference type="PDB" id="4DV2">
    <property type="method" value="X-ray"/>
    <property type="resolution" value="3.65 A"/>
    <property type="chains" value="R=1-88"/>
</dbReference>
<dbReference type="PDB" id="4DV3">
    <property type="method" value="X-ray"/>
    <property type="resolution" value="3.55 A"/>
    <property type="chains" value="R=1-88"/>
</dbReference>
<dbReference type="PDB" id="4DV4">
    <property type="method" value="X-ray"/>
    <property type="resolution" value="3.65 A"/>
    <property type="chains" value="R=1-88"/>
</dbReference>
<dbReference type="PDB" id="4DV5">
    <property type="method" value="X-ray"/>
    <property type="resolution" value="3.68 A"/>
    <property type="chains" value="R=1-88"/>
</dbReference>
<dbReference type="PDB" id="4DV6">
    <property type="method" value="X-ray"/>
    <property type="resolution" value="3.30 A"/>
    <property type="chains" value="R=1-88"/>
</dbReference>
<dbReference type="PDB" id="4DV7">
    <property type="method" value="X-ray"/>
    <property type="resolution" value="3.29 A"/>
    <property type="chains" value="R=1-88"/>
</dbReference>
<dbReference type="PDB" id="4GKJ">
    <property type="method" value="X-ray"/>
    <property type="resolution" value="3.30 A"/>
    <property type="chains" value="R=16-88"/>
</dbReference>
<dbReference type="PDB" id="4GKK">
    <property type="method" value="X-ray"/>
    <property type="resolution" value="3.20 A"/>
    <property type="chains" value="R=16-88"/>
</dbReference>
<dbReference type="PDB" id="4JI0">
    <property type="method" value="X-ray"/>
    <property type="resolution" value="3.49 A"/>
    <property type="chains" value="R=1-88"/>
</dbReference>
<dbReference type="PDB" id="4JI1">
    <property type="method" value="X-ray"/>
    <property type="resolution" value="3.14 A"/>
    <property type="chains" value="R=1-88"/>
</dbReference>
<dbReference type="PDB" id="4JI2">
    <property type="method" value="X-ray"/>
    <property type="resolution" value="3.64 A"/>
    <property type="chains" value="R=1-88"/>
</dbReference>
<dbReference type="PDB" id="4JI3">
    <property type="method" value="X-ray"/>
    <property type="resolution" value="3.35 A"/>
    <property type="chains" value="R=1-88"/>
</dbReference>
<dbReference type="PDB" id="4JI4">
    <property type="method" value="X-ray"/>
    <property type="resolution" value="3.69 A"/>
    <property type="chains" value="R=1-88"/>
</dbReference>
<dbReference type="PDB" id="4JI5">
    <property type="method" value="X-ray"/>
    <property type="resolution" value="3.85 A"/>
    <property type="chains" value="R=1-88"/>
</dbReference>
<dbReference type="PDB" id="4JI6">
    <property type="method" value="X-ray"/>
    <property type="resolution" value="3.55 A"/>
    <property type="chains" value="R=1-88"/>
</dbReference>
<dbReference type="PDB" id="4JI7">
    <property type="method" value="X-ray"/>
    <property type="resolution" value="3.50 A"/>
    <property type="chains" value="R=1-88"/>
</dbReference>
<dbReference type="PDB" id="4JI8">
    <property type="method" value="X-ray"/>
    <property type="resolution" value="3.74 A"/>
    <property type="chains" value="R=1-88"/>
</dbReference>
<dbReference type="PDB" id="4JV5">
    <property type="method" value="X-ray"/>
    <property type="resolution" value="3.16 A"/>
    <property type="chains" value="R=19-88"/>
</dbReference>
<dbReference type="PDB" id="4JYA">
    <property type="method" value="X-ray"/>
    <property type="resolution" value="3.10 A"/>
    <property type="chains" value="R=19-88"/>
</dbReference>
<dbReference type="PDB" id="4K0K">
    <property type="method" value="X-ray"/>
    <property type="resolution" value="3.40 A"/>
    <property type="chains" value="R=19-88"/>
</dbReference>
<dbReference type="PDB" id="4KHP">
    <property type="method" value="X-ray"/>
    <property type="resolution" value="3.10 A"/>
    <property type="chains" value="R=19-88"/>
</dbReference>
<dbReference type="PDB" id="4L47">
    <property type="method" value="X-ray"/>
    <property type="resolution" value="3.22 A"/>
    <property type="chains" value="QR/XR=1-88"/>
</dbReference>
<dbReference type="PDB" id="4L71">
    <property type="method" value="X-ray"/>
    <property type="resolution" value="3.90 A"/>
    <property type="chains" value="QR/XR=1-88"/>
</dbReference>
<dbReference type="PDB" id="4LEL">
    <property type="method" value="X-ray"/>
    <property type="resolution" value="3.90 A"/>
    <property type="chains" value="QR/XR=1-88"/>
</dbReference>
<dbReference type="PDB" id="4LF4">
    <property type="method" value="X-ray"/>
    <property type="resolution" value="3.34 A"/>
    <property type="chains" value="R=1-88"/>
</dbReference>
<dbReference type="PDB" id="4LF5">
    <property type="method" value="X-ray"/>
    <property type="resolution" value="3.75 A"/>
    <property type="chains" value="R=1-88"/>
</dbReference>
<dbReference type="PDB" id="4LF6">
    <property type="method" value="X-ray"/>
    <property type="resolution" value="3.31 A"/>
    <property type="chains" value="R=1-88"/>
</dbReference>
<dbReference type="PDB" id="4LF7">
    <property type="method" value="X-ray"/>
    <property type="resolution" value="3.15 A"/>
    <property type="chains" value="R=1-88"/>
</dbReference>
<dbReference type="PDB" id="4LF8">
    <property type="method" value="X-ray"/>
    <property type="resolution" value="3.15 A"/>
    <property type="chains" value="R=1-88"/>
</dbReference>
<dbReference type="PDB" id="4LF9">
    <property type="method" value="X-ray"/>
    <property type="resolution" value="3.28 A"/>
    <property type="chains" value="R=1-88"/>
</dbReference>
<dbReference type="PDB" id="4LFA">
    <property type="method" value="X-ray"/>
    <property type="resolution" value="3.65 A"/>
    <property type="chains" value="R=1-88"/>
</dbReference>
<dbReference type="PDB" id="4LFB">
    <property type="method" value="X-ray"/>
    <property type="resolution" value="3.01 A"/>
    <property type="chains" value="R=1-88"/>
</dbReference>
<dbReference type="PDB" id="4LFC">
    <property type="method" value="X-ray"/>
    <property type="resolution" value="3.60 A"/>
    <property type="chains" value="R=1-88"/>
</dbReference>
<dbReference type="PDB" id="4LFZ">
    <property type="method" value="X-ray"/>
    <property type="resolution" value="3.92 A"/>
    <property type="chains" value="QR/XR=1-88"/>
</dbReference>
<dbReference type="PDB" id="4LNT">
    <property type="method" value="X-ray"/>
    <property type="resolution" value="2.94 A"/>
    <property type="chains" value="QR/XR=1-88"/>
</dbReference>
<dbReference type="PDB" id="4LSK">
    <property type="method" value="X-ray"/>
    <property type="resolution" value="3.48 A"/>
    <property type="chains" value="QR/XR=1-88"/>
</dbReference>
<dbReference type="PDB" id="4LT8">
    <property type="method" value="X-ray"/>
    <property type="resolution" value="3.14 A"/>
    <property type="chains" value="QR/XR=1-88"/>
</dbReference>
<dbReference type="PDB" id="4NXM">
    <property type="method" value="X-ray"/>
    <property type="resolution" value="3.65 A"/>
    <property type="chains" value="R=1-88"/>
</dbReference>
<dbReference type="PDB" id="4NXN">
    <property type="method" value="X-ray"/>
    <property type="resolution" value="3.54 A"/>
    <property type="chains" value="R=1-88"/>
</dbReference>
<dbReference type="PDB" id="4OX9">
    <property type="method" value="X-ray"/>
    <property type="resolution" value="3.80 A"/>
    <property type="chains" value="R=1-88"/>
</dbReference>
<dbReference type="PDB" id="4P6F">
    <property type="method" value="X-ray"/>
    <property type="resolution" value="3.60 A"/>
    <property type="chains" value="QR/XR=1-88"/>
</dbReference>
<dbReference type="PDB" id="4P70">
    <property type="method" value="X-ray"/>
    <property type="resolution" value="3.68 A"/>
    <property type="chains" value="QR/XR=1-88"/>
</dbReference>
<dbReference type="PDB" id="4TUA">
    <property type="method" value="X-ray"/>
    <property type="resolution" value="3.60 A"/>
    <property type="chains" value="QR/XR=1-88"/>
</dbReference>
<dbReference type="PDB" id="4TUB">
    <property type="method" value="X-ray"/>
    <property type="resolution" value="3.60 A"/>
    <property type="chains" value="QR/XR=1-88"/>
</dbReference>
<dbReference type="PDB" id="4TUC">
    <property type="method" value="X-ray"/>
    <property type="resolution" value="3.60 A"/>
    <property type="chains" value="QR/XR=1-88"/>
</dbReference>
<dbReference type="PDB" id="4TUD">
    <property type="method" value="X-ray"/>
    <property type="resolution" value="3.60 A"/>
    <property type="chains" value="QR/XR=1-88"/>
</dbReference>
<dbReference type="PDB" id="4TUE">
    <property type="method" value="X-ray"/>
    <property type="resolution" value="3.50 A"/>
    <property type="chains" value="QR/XR=1-88"/>
</dbReference>
<dbReference type="PDB" id="4V42">
    <property type="method" value="X-ray"/>
    <property type="resolution" value="5.50 A"/>
    <property type="chains" value="U=1-88"/>
</dbReference>
<dbReference type="PDB" id="4V49">
    <property type="method" value="X-ray"/>
    <property type="resolution" value="8.70 A"/>
    <property type="chains" value="R=16-88"/>
</dbReference>
<dbReference type="PDB" id="4V4A">
    <property type="method" value="X-ray"/>
    <property type="resolution" value="9.50 A"/>
    <property type="chains" value="R=16-88"/>
</dbReference>
<dbReference type="PDB" id="4V4G">
    <property type="method" value="X-ray"/>
    <property type="resolution" value="11.50 A"/>
    <property type="chains" value="R=16-88"/>
</dbReference>
<dbReference type="PDB" id="4V4I">
    <property type="method" value="X-ray"/>
    <property type="resolution" value="3.71 A"/>
    <property type="chains" value="s=1-88"/>
</dbReference>
<dbReference type="PDB" id="4V4P">
    <property type="method" value="X-ray"/>
    <property type="resolution" value="5.50 A"/>
    <property type="chains" value="BU=1-88"/>
</dbReference>
<dbReference type="PDB" id="4V4R">
    <property type="method" value="X-ray"/>
    <property type="resolution" value="5.90 A"/>
    <property type="chains" value="AR=1-88"/>
</dbReference>
<dbReference type="PDB" id="4V4S">
    <property type="method" value="X-ray"/>
    <property type="resolution" value="6.76 A"/>
    <property type="chains" value="AR=1-88"/>
</dbReference>
<dbReference type="PDB" id="4V4T">
    <property type="method" value="X-ray"/>
    <property type="resolution" value="6.46 A"/>
    <property type="chains" value="AR=1-88"/>
</dbReference>
<dbReference type="PDB" id="4V4X">
    <property type="method" value="X-ray"/>
    <property type="resolution" value="5.00 A"/>
    <property type="chains" value="AU=1-88"/>
</dbReference>
<dbReference type="PDB" id="4V4Y">
    <property type="method" value="X-ray"/>
    <property type="resolution" value="5.50 A"/>
    <property type="chains" value="AU=1-88"/>
</dbReference>
<dbReference type="PDB" id="4V4Z">
    <property type="method" value="X-ray"/>
    <property type="resolution" value="4.51 A"/>
    <property type="chains" value="AU=1-88"/>
</dbReference>
<dbReference type="PDB" id="4V51">
    <property type="method" value="X-ray"/>
    <property type="resolution" value="2.80 A"/>
    <property type="chains" value="AR/CR=2-88"/>
</dbReference>
<dbReference type="PDB" id="4V5A">
    <property type="method" value="X-ray"/>
    <property type="resolution" value="3.50 A"/>
    <property type="chains" value="AR/CR=2-88"/>
</dbReference>
<dbReference type="PDB" id="4V5C">
    <property type="method" value="X-ray"/>
    <property type="resolution" value="3.30 A"/>
    <property type="chains" value="AR/CR=1-88"/>
</dbReference>
<dbReference type="PDB" id="4V5D">
    <property type="method" value="X-ray"/>
    <property type="resolution" value="3.50 A"/>
    <property type="chains" value="AR/CR=1-88"/>
</dbReference>
<dbReference type="PDB" id="4V5E">
    <property type="method" value="X-ray"/>
    <property type="resolution" value="3.45 A"/>
    <property type="chains" value="AR/CR=1-88"/>
</dbReference>
<dbReference type="PDB" id="4V5F">
    <property type="method" value="X-ray"/>
    <property type="resolution" value="3.60 A"/>
    <property type="chains" value="AR/CR=1-88"/>
</dbReference>
<dbReference type="PDB" id="4V5G">
    <property type="method" value="X-ray"/>
    <property type="resolution" value="3.60 A"/>
    <property type="chains" value="AR/CR=1-88"/>
</dbReference>
<dbReference type="PDB" id="4V5J">
    <property type="method" value="X-ray"/>
    <property type="resolution" value="3.10 A"/>
    <property type="chains" value="AR/CR=1-88"/>
</dbReference>
<dbReference type="PDB" id="4V5K">
    <property type="method" value="X-ray"/>
    <property type="resolution" value="3.20 A"/>
    <property type="chains" value="AR/CR=1-88"/>
</dbReference>
<dbReference type="PDB" id="4V5L">
    <property type="method" value="X-ray"/>
    <property type="resolution" value="3.10 A"/>
    <property type="chains" value="R=1-88"/>
</dbReference>
<dbReference type="PDB" id="4V5M">
    <property type="method" value="EM"/>
    <property type="resolution" value="7.80 A"/>
    <property type="chains" value="AR=1-88"/>
</dbReference>
<dbReference type="PDB" id="4V5N">
    <property type="method" value="EM"/>
    <property type="resolution" value="7.60 A"/>
    <property type="chains" value="AR=1-88"/>
</dbReference>
<dbReference type="PDB" id="4V5P">
    <property type="method" value="X-ray"/>
    <property type="resolution" value="3.10 A"/>
    <property type="chains" value="AR/CR=1-88"/>
</dbReference>
<dbReference type="PDB" id="4V5Q">
    <property type="method" value="X-ray"/>
    <property type="resolution" value="3.10 A"/>
    <property type="chains" value="AR/CR=1-88"/>
</dbReference>
<dbReference type="PDB" id="4V5R">
    <property type="method" value="X-ray"/>
    <property type="resolution" value="3.10 A"/>
    <property type="chains" value="AR/CR=1-88"/>
</dbReference>
<dbReference type="PDB" id="4V5S">
    <property type="method" value="X-ray"/>
    <property type="resolution" value="3.10 A"/>
    <property type="chains" value="AR/CR=1-88"/>
</dbReference>
<dbReference type="PDB" id="4V68">
    <property type="method" value="EM"/>
    <property type="resolution" value="6.40 A"/>
    <property type="chains" value="AR=19-88"/>
</dbReference>
<dbReference type="PDB" id="4V6A">
    <property type="method" value="X-ray"/>
    <property type="resolution" value="3.10 A"/>
    <property type="chains" value="AR/CR=1-88"/>
</dbReference>
<dbReference type="PDB" id="4V6F">
    <property type="method" value="X-ray"/>
    <property type="resolution" value="3.10 A"/>
    <property type="chains" value="BU/CU=1-88"/>
</dbReference>
<dbReference type="PDB" id="4V6G">
    <property type="method" value="X-ray"/>
    <property type="resolution" value="3.50 A"/>
    <property type="chains" value="AU/CU=1-88"/>
</dbReference>
<dbReference type="PDB" id="4V7J">
    <property type="method" value="X-ray"/>
    <property type="resolution" value="3.30 A"/>
    <property type="chains" value="Ar/Br=1-88"/>
</dbReference>
<dbReference type="PDB" id="4V7K">
    <property type="method" value="X-ray"/>
    <property type="resolution" value="3.60 A"/>
    <property type="chains" value="Ar/Br=1-88"/>
</dbReference>
<dbReference type="PDB" id="4V7L">
    <property type="method" value="X-ray"/>
    <property type="resolution" value="3.00 A"/>
    <property type="chains" value="AR/CR=1-88"/>
</dbReference>
<dbReference type="PDB" id="4V7M">
    <property type="method" value="X-ray"/>
    <property type="resolution" value="3.45 A"/>
    <property type="chains" value="AR/CR=1-88"/>
</dbReference>
<dbReference type="PDB" id="4V7W">
    <property type="method" value="X-ray"/>
    <property type="resolution" value="3.00 A"/>
    <property type="chains" value="AR/CR=1-88"/>
</dbReference>
<dbReference type="PDB" id="4V7X">
    <property type="method" value="X-ray"/>
    <property type="resolution" value="3.00 A"/>
    <property type="chains" value="AR/CR=1-88"/>
</dbReference>
<dbReference type="PDB" id="4V7Y">
    <property type="method" value="X-ray"/>
    <property type="resolution" value="3.00 A"/>
    <property type="chains" value="AR/CR=1-88"/>
</dbReference>
<dbReference type="PDB" id="4V7Z">
    <property type="method" value="X-ray"/>
    <property type="resolution" value="3.10 A"/>
    <property type="chains" value="AR/CR=1-88"/>
</dbReference>
<dbReference type="PDB" id="4V87">
    <property type="method" value="X-ray"/>
    <property type="resolution" value="3.10 A"/>
    <property type="chains" value="BU/CU=1-88"/>
</dbReference>
<dbReference type="PDB" id="4V8A">
    <property type="method" value="X-ray"/>
    <property type="resolution" value="3.20 A"/>
    <property type="chains" value="CR/DR=1-88"/>
</dbReference>
<dbReference type="PDB" id="4V8B">
    <property type="method" value="X-ray"/>
    <property type="resolution" value="3.00 A"/>
    <property type="chains" value="AU/CU=1-88"/>
</dbReference>
<dbReference type="PDB" id="4V8C">
    <property type="method" value="X-ray"/>
    <property type="resolution" value="3.30 A"/>
    <property type="chains" value="CU/DU=1-88"/>
</dbReference>
<dbReference type="PDB" id="4V8D">
    <property type="method" value="X-ray"/>
    <property type="resolution" value="3.00 A"/>
    <property type="chains" value="AU/CU=1-88"/>
</dbReference>
<dbReference type="PDB" id="4V8E">
    <property type="method" value="X-ray"/>
    <property type="resolution" value="3.30 A"/>
    <property type="chains" value="BU/DU=1-88"/>
</dbReference>
<dbReference type="PDB" id="4V8F">
    <property type="method" value="X-ray"/>
    <property type="resolution" value="3.30 A"/>
    <property type="chains" value="BU/CU=1-88"/>
</dbReference>
<dbReference type="PDB" id="4V8G">
    <property type="method" value="X-ray"/>
    <property type="resolution" value="3.00 A"/>
    <property type="chains" value="AR/CR=1-88"/>
</dbReference>
<dbReference type="PDB" id="4V8H">
    <property type="method" value="X-ray"/>
    <property type="resolution" value="3.10 A"/>
    <property type="chains" value="AR/CR=1-88"/>
</dbReference>
<dbReference type="PDB" id="4V8I">
    <property type="method" value="X-ray"/>
    <property type="resolution" value="2.70 A"/>
    <property type="chains" value="AR/CR=1-88"/>
</dbReference>
<dbReference type="PDB" id="4V8J">
    <property type="method" value="X-ray"/>
    <property type="resolution" value="3.90 A"/>
    <property type="chains" value="AR/CR=1-88"/>
</dbReference>
<dbReference type="PDB" id="4V8N">
    <property type="method" value="X-ray"/>
    <property type="resolution" value="3.10 A"/>
    <property type="chains" value="AR/CR=1-88"/>
</dbReference>
<dbReference type="PDB" id="4V8O">
    <property type="method" value="X-ray"/>
    <property type="resolution" value="3.80 A"/>
    <property type="chains" value="AR=1-88"/>
</dbReference>
<dbReference type="PDB" id="4V8Q">
    <property type="method" value="X-ray"/>
    <property type="resolution" value="3.10 A"/>
    <property type="chains" value="BR=1-88"/>
</dbReference>
<dbReference type="PDB" id="4V8U">
    <property type="method" value="X-ray"/>
    <property type="resolution" value="3.70 A"/>
    <property type="chains" value="AR/CR=1-88"/>
</dbReference>
<dbReference type="PDB" id="4V8X">
    <property type="method" value="X-ray"/>
    <property type="resolution" value="3.35 A"/>
    <property type="chains" value="AR/CR=1-88"/>
</dbReference>
<dbReference type="PDB" id="4V90">
    <property type="method" value="X-ray"/>
    <property type="resolution" value="2.95 A"/>
    <property type="chains" value="AR=1-88"/>
</dbReference>
<dbReference type="PDB" id="4V95">
    <property type="method" value="X-ray"/>
    <property type="resolution" value="3.20 A"/>
    <property type="chains" value="AR/CR=1-88"/>
</dbReference>
<dbReference type="PDB" id="4V97">
    <property type="method" value="X-ray"/>
    <property type="resolution" value="3.52 A"/>
    <property type="chains" value="AR/CR=1-88"/>
</dbReference>
<dbReference type="PDB" id="4V9A">
    <property type="method" value="X-ray"/>
    <property type="resolution" value="3.30 A"/>
    <property type="chains" value="AU/CU=1-88"/>
</dbReference>
<dbReference type="PDB" id="4V9B">
    <property type="method" value="X-ray"/>
    <property type="resolution" value="3.10 A"/>
    <property type="chains" value="AU/CU=1-88"/>
</dbReference>
<dbReference type="PDB" id="4V9H">
    <property type="method" value="X-ray"/>
    <property type="resolution" value="2.86 A"/>
    <property type="chains" value="AR=19-88"/>
</dbReference>
<dbReference type="PDB" id="4V9I">
    <property type="method" value="X-ray"/>
    <property type="resolution" value="3.30 A"/>
    <property type="chains" value="AR/CR=19-88"/>
</dbReference>
<dbReference type="PDB" id="4V9R">
    <property type="method" value="X-ray"/>
    <property type="resolution" value="3.00 A"/>
    <property type="chains" value="AR/CR=1-88"/>
</dbReference>
<dbReference type="PDB" id="4V9S">
    <property type="method" value="X-ray"/>
    <property type="resolution" value="3.10 A"/>
    <property type="chains" value="AR/CR=1-88"/>
</dbReference>
<dbReference type="PDB" id="4W2E">
    <property type="method" value="X-ray"/>
    <property type="resolution" value="2.90 A"/>
    <property type="chains" value="r=1-88"/>
</dbReference>
<dbReference type="PDB" id="4W2F">
    <property type="method" value="X-ray"/>
    <property type="resolution" value="2.40 A"/>
    <property type="chains" value="AR/CR=1-88"/>
</dbReference>
<dbReference type="PDB" id="4W2G">
    <property type="method" value="X-ray"/>
    <property type="resolution" value="2.55 A"/>
    <property type="chains" value="AR/CR=1-88"/>
</dbReference>
<dbReference type="PDB" id="4W2H">
    <property type="method" value="X-ray"/>
    <property type="resolution" value="2.70 A"/>
    <property type="chains" value="AR/CR=1-88"/>
</dbReference>
<dbReference type="PDB" id="4W2I">
    <property type="method" value="X-ray"/>
    <property type="resolution" value="2.70 A"/>
    <property type="chains" value="AR/CR=1-88"/>
</dbReference>
<dbReference type="PDB" id="4W4G">
    <property type="method" value="X-ray"/>
    <property type="resolution" value="3.30 A"/>
    <property type="chains" value="QR/XR=1-88"/>
</dbReference>
<dbReference type="PDB" id="4WPO">
    <property type="method" value="X-ray"/>
    <property type="resolution" value="2.80 A"/>
    <property type="chains" value="BR/DR=1-88"/>
</dbReference>
<dbReference type="PDB" id="4WQ1">
    <property type="method" value="X-ray"/>
    <property type="resolution" value="3.10 A"/>
    <property type="chains" value="9A/9I=1-88"/>
</dbReference>
<dbReference type="PDB" id="4WQF">
    <property type="method" value="X-ray"/>
    <property type="resolution" value="2.80 A"/>
    <property type="chains" value="BR/DR=1-88"/>
</dbReference>
<dbReference type="PDB" id="4WQR">
    <property type="method" value="X-ray"/>
    <property type="resolution" value="3.15 A"/>
    <property type="chains" value="9A/9I=1-88"/>
</dbReference>
<dbReference type="PDB" id="4WQU">
    <property type="method" value="X-ray"/>
    <property type="resolution" value="2.80 A"/>
    <property type="chains" value="BR/DR=1-88"/>
</dbReference>
<dbReference type="PDB" id="4WQY">
    <property type="method" value="X-ray"/>
    <property type="resolution" value="2.80 A"/>
    <property type="chains" value="BR/DR=1-88"/>
</dbReference>
<dbReference type="PDB" id="4WR6">
    <property type="method" value="X-ray"/>
    <property type="resolution" value="3.05 A"/>
    <property type="chains" value="9A/9I=1-88"/>
</dbReference>
<dbReference type="PDB" id="4WRA">
    <property type="method" value="X-ray"/>
    <property type="resolution" value="3.05 A"/>
    <property type="chains" value="9A/9I=1-88"/>
</dbReference>
<dbReference type="PDB" id="4WRO">
    <property type="method" value="X-ray"/>
    <property type="resolution" value="3.05 A"/>
    <property type="chains" value="9I=1-88"/>
</dbReference>
<dbReference type="PDB" id="4WSD">
    <property type="method" value="X-ray"/>
    <property type="resolution" value="2.95 A"/>
    <property type="chains" value="9A/9I=1-88"/>
</dbReference>
<dbReference type="PDB" id="4WSM">
    <property type="method" value="X-ray"/>
    <property type="resolution" value="3.30 A"/>
    <property type="chains" value="9A/9I=1-88"/>
</dbReference>
<dbReference type="PDB" id="4WT1">
    <property type="method" value="X-ray"/>
    <property type="resolution" value="3.05 A"/>
    <property type="chains" value="9A/9I=1-88"/>
</dbReference>
<dbReference type="PDB" id="4WT8">
    <property type="method" value="X-ray"/>
    <property type="resolution" value="3.40 A"/>
    <property type="chains" value="AS/BS=19-88"/>
</dbReference>
<dbReference type="PDB" id="4WU1">
    <property type="method" value="X-ray"/>
    <property type="resolution" value="3.20 A"/>
    <property type="chains" value="9A/9I=1-88"/>
</dbReference>
<dbReference type="PDB" id="4WZD">
    <property type="method" value="X-ray"/>
    <property type="resolution" value="3.10 A"/>
    <property type="chains" value="9A/9I=1-88"/>
</dbReference>
<dbReference type="PDB" id="4WZO">
    <property type="method" value="X-ray"/>
    <property type="resolution" value="3.30 A"/>
    <property type="chains" value="9A/9I=1-88"/>
</dbReference>
<dbReference type="PDB" id="4X62">
    <property type="method" value="X-ray"/>
    <property type="resolution" value="3.45 A"/>
    <property type="chains" value="R=16-88"/>
</dbReference>
<dbReference type="PDB" id="4X64">
    <property type="method" value="X-ray"/>
    <property type="resolution" value="3.35 A"/>
    <property type="chains" value="R=16-88"/>
</dbReference>
<dbReference type="PDB" id="4X65">
    <property type="method" value="X-ray"/>
    <property type="resolution" value="3.35 A"/>
    <property type="chains" value="R=16-88"/>
</dbReference>
<dbReference type="PDB" id="4X66">
    <property type="method" value="X-ray"/>
    <property type="resolution" value="3.45 A"/>
    <property type="chains" value="R=16-88"/>
</dbReference>
<dbReference type="PDB" id="4Y4O">
    <property type="method" value="X-ray"/>
    <property type="resolution" value="2.30 A"/>
    <property type="chains" value="1r/2r=1-88"/>
</dbReference>
<dbReference type="PDB" id="4Y4P">
    <property type="method" value="X-ray"/>
    <property type="resolution" value="2.50 A"/>
    <property type="chains" value="1r/2r=1-88"/>
</dbReference>
<dbReference type="PDB" id="4YHH">
    <property type="method" value="X-ray"/>
    <property type="resolution" value="3.42 A"/>
    <property type="chains" value="R=16-88"/>
</dbReference>
<dbReference type="PDB" id="4YPB">
    <property type="method" value="X-ray"/>
    <property type="resolution" value="3.40 A"/>
    <property type="chains" value="QR/XR=1-88"/>
</dbReference>
<dbReference type="PDB" id="4YY3">
    <property type="method" value="X-ray"/>
    <property type="resolution" value="3.60 A"/>
    <property type="chains" value="R=1-88"/>
</dbReference>
<dbReference type="PDB" id="4YZV">
    <property type="method" value="X-ray"/>
    <property type="resolution" value="3.10 A"/>
    <property type="chains" value="QR/XR=1-88"/>
</dbReference>
<dbReference type="PDB" id="4Z3S">
    <property type="method" value="X-ray"/>
    <property type="resolution" value="2.65 A"/>
    <property type="chains" value="1r/2r=1-88"/>
</dbReference>
<dbReference type="PDB" id="4Z8C">
    <property type="method" value="X-ray"/>
    <property type="resolution" value="2.90 A"/>
    <property type="chains" value="1r/2r=1-88"/>
</dbReference>
<dbReference type="PDB" id="4ZER">
    <property type="method" value="X-ray"/>
    <property type="resolution" value="3.10 A"/>
    <property type="chains" value="1r/2r=20-87"/>
</dbReference>
<dbReference type="PDB" id="4ZSN">
    <property type="method" value="X-ray"/>
    <property type="resolution" value="3.60 A"/>
    <property type="chains" value="QR/XR=1-88"/>
</dbReference>
<dbReference type="PDB" id="5AA0">
    <property type="method" value="EM"/>
    <property type="resolution" value="5.00 A"/>
    <property type="chains" value="BV=16-88"/>
</dbReference>
<dbReference type="PDB" id="5BR8">
    <property type="method" value="X-ray"/>
    <property type="resolution" value="3.40 A"/>
    <property type="chains" value="R=1-88"/>
</dbReference>
<dbReference type="PDB" id="5CZP">
    <property type="method" value="X-ray"/>
    <property type="resolution" value="3.30 A"/>
    <property type="chains" value="QR/XR=1-88"/>
</dbReference>
<dbReference type="PDB" id="5D8B">
    <property type="method" value="X-ray"/>
    <property type="resolution" value="3.63 A"/>
    <property type="chains" value="OC/SA=1-88"/>
</dbReference>
<dbReference type="PDB" id="5DFE">
    <property type="method" value="X-ray"/>
    <property type="resolution" value="3.10 A"/>
    <property type="chains" value="QR/XR=1-88"/>
</dbReference>
<dbReference type="PDB" id="5DOX">
    <property type="method" value="X-ray"/>
    <property type="resolution" value="3.10 A"/>
    <property type="chains" value="1r/2r=1-88"/>
</dbReference>
<dbReference type="PDB" id="5DOY">
    <property type="method" value="X-ray"/>
    <property type="resolution" value="2.60 A"/>
    <property type="chains" value="1r/2r=1-88"/>
</dbReference>
<dbReference type="PDB" id="5E7K">
    <property type="method" value="X-ray"/>
    <property type="resolution" value="3.20 A"/>
    <property type="chains" value="9A/9I=1-88"/>
</dbReference>
<dbReference type="PDB" id="5E81">
    <property type="method" value="X-ray"/>
    <property type="resolution" value="2.95 A"/>
    <property type="chains" value="9A/9I=1-88"/>
</dbReference>
<dbReference type="PDB" id="5EL4">
    <property type="method" value="X-ray"/>
    <property type="resolution" value="3.15 A"/>
    <property type="chains" value="9A/9I=1-88"/>
</dbReference>
<dbReference type="PDB" id="5EL5">
    <property type="method" value="X-ray"/>
    <property type="resolution" value="3.15 A"/>
    <property type="chains" value="9A/9I=1-88"/>
</dbReference>
<dbReference type="PDB" id="5EL6">
    <property type="method" value="X-ray"/>
    <property type="resolution" value="3.10 A"/>
    <property type="chains" value="9A/9I=1-88"/>
</dbReference>
<dbReference type="PDB" id="5EL7">
    <property type="method" value="X-ray"/>
    <property type="resolution" value="3.15 A"/>
    <property type="chains" value="9A/9I=1-88"/>
</dbReference>
<dbReference type="PDB" id="5F8K">
    <property type="method" value="X-ray"/>
    <property type="resolution" value="2.80 A"/>
    <property type="chains" value="1r/2r=20-87"/>
</dbReference>
<dbReference type="PDB" id="5FDU">
    <property type="method" value="X-ray"/>
    <property type="resolution" value="2.90 A"/>
    <property type="chains" value="1r/2r=20-87"/>
</dbReference>
<dbReference type="PDB" id="5FDV">
    <property type="method" value="X-ray"/>
    <property type="resolution" value="2.80 A"/>
    <property type="chains" value="1r/2r=20-87"/>
</dbReference>
<dbReference type="PDB" id="5HAU">
    <property type="method" value="X-ray"/>
    <property type="resolution" value="3.00 A"/>
    <property type="chains" value="1r/2r=1-88"/>
</dbReference>
<dbReference type="PDB" id="5HCP">
    <property type="method" value="X-ray"/>
    <property type="resolution" value="2.89 A"/>
    <property type="chains" value="1r/2r=1-88"/>
</dbReference>
<dbReference type="PDB" id="5HCQ">
    <property type="method" value="X-ray"/>
    <property type="resolution" value="2.80 A"/>
    <property type="chains" value="1r/2r=1-88"/>
</dbReference>
<dbReference type="PDB" id="5HCR">
    <property type="method" value="X-ray"/>
    <property type="resolution" value="2.80 A"/>
    <property type="chains" value="1r/2r=1-88"/>
</dbReference>
<dbReference type="PDB" id="5HD1">
    <property type="method" value="X-ray"/>
    <property type="resolution" value="2.70 A"/>
    <property type="chains" value="1r/2r=1-88"/>
</dbReference>
<dbReference type="PDB" id="5IB7">
    <property type="method" value="X-ray"/>
    <property type="resolution" value="2.99 A"/>
    <property type="chains" value="9A/9I=1-88"/>
</dbReference>
<dbReference type="PDB" id="5IB8">
    <property type="method" value="X-ray"/>
    <property type="resolution" value="3.13 A"/>
    <property type="chains" value="9A/9I=1-88"/>
</dbReference>
<dbReference type="PDB" id="5IBB">
    <property type="method" value="X-ray"/>
    <property type="resolution" value="2.96 A"/>
    <property type="chains" value="9A/9I=1-88"/>
</dbReference>
<dbReference type="PDB" id="5IWA">
    <property type="method" value="X-ray"/>
    <property type="resolution" value="3.50 A"/>
    <property type="chains" value="R=18-88"/>
</dbReference>
<dbReference type="PDB" id="5J30">
    <property type="method" value="X-ray"/>
    <property type="resolution" value="3.20 A"/>
    <property type="chains" value="QR/XR=1-88"/>
</dbReference>
<dbReference type="PDB" id="5J3C">
    <property type="method" value="X-ray"/>
    <property type="resolution" value="3.04 A"/>
    <property type="chains" value="QR/XR=1-88"/>
</dbReference>
<dbReference type="PDB" id="5J4B">
    <property type="method" value="X-ray"/>
    <property type="resolution" value="2.60 A"/>
    <property type="chains" value="1r/2r=1-88"/>
</dbReference>
<dbReference type="PDB" id="5J4C">
    <property type="method" value="X-ray"/>
    <property type="resolution" value="2.80 A"/>
    <property type="chains" value="1r/2r=1-88"/>
</dbReference>
<dbReference type="PDB" id="5J8B">
    <property type="method" value="X-ray"/>
    <property type="resolution" value="2.60 A"/>
    <property type="chains" value="r=1-88"/>
</dbReference>
<dbReference type="PDB" id="5LMN">
    <property type="method" value="EM"/>
    <property type="resolution" value="3.55 A"/>
    <property type="chains" value="R=1-88"/>
</dbReference>
<dbReference type="PDB" id="5LMO">
    <property type="method" value="EM"/>
    <property type="resolution" value="4.30 A"/>
    <property type="chains" value="R=1-88"/>
</dbReference>
<dbReference type="PDB" id="5LMP">
    <property type="method" value="EM"/>
    <property type="resolution" value="5.35 A"/>
    <property type="chains" value="R=1-88"/>
</dbReference>
<dbReference type="PDB" id="5LMQ">
    <property type="method" value="EM"/>
    <property type="resolution" value="4.20 A"/>
    <property type="chains" value="R=1-88"/>
</dbReference>
<dbReference type="PDB" id="5LMR">
    <property type="method" value="EM"/>
    <property type="resolution" value="4.45 A"/>
    <property type="chains" value="R=1-88"/>
</dbReference>
<dbReference type="PDB" id="5LMS">
    <property type="method" value="EM"/>
    <property type="resolution" value="5.10 A"/>
    <property type="chains" value="R=1-88"/>
</dbReference>
<dbReference type="PDB" id="5LMT">
    <property type="method" value="EM"/>
    <property type="resolution" value="4.15 A"/>
    <property type="chains" value="R=1-88"/>
</dbReference>
<dbReference type="PDB" id="5LMU">
    <property type="method" value="EM"/>
    <property type="resolution" value="4.00 A"/>
    <property type="chains" value="R=1-88"/>
</dbReference>
<dbReference type="PDB" id="5LMV">
    <property type="method" value="EM"/>
    <property type="resolution" value="4.90 A"/>
    <property type="chains" value="R=1-88"/>
</dbReference>
<dbReference type="PDB" id="5NDJ">
    <property type="method" value="X-ray"/>
    <property type="resolution" value="3.15 A"/>
    <property type="chains" value="9A/9I=1-88"/>
</dbReference>
<dbReference type="PDB" id="5NDK">
    <property type="method" value="X-ray"/>
    <property type="resolution" value="2.95 A"/>
    <property type="chains" value="9A/9I=1-88"/>
</dbReference>
<dbReference type="PDB" id="5OT7">
    <property type="method" value="EM"/>
    <property type="resolution" value="3.80 A"/>
    <property type="chains" value="Q=19-88"/>
</dbReference>
<dbReference type="PDB" id="5UQ7">
    <property type="method" value="EM"/>
    <property type="resolution" value="3.50 A"/>
    <property type="chains" value="r=20-87"/>
</dbReference>
<dbReference type="PDB" id="5UQ8">
    <property type="method" value="EM"/>
    <property type="resolution" value="3.20 A"/>
    <property type="chains" value="r=20-87"/>
</dbReference>
<dbReference type="PDB" id="5VP2">
    <property type="method" value="X-ray"/>
    <property type="resolution" value="2.80 A"/>
    <property type="chains" value="1r/2r=1-88"/>
</dbReference>
<dbReference type="PDB" id="5VPO">
    <property type="method" value="X-ray"/>
    <property type="resolution" value="3.34 A"/>
    <property type="chains" value="QR/XR=1-88"/>
</dbReference>
<dbReference type="PDB" id="5VPP">
    <property type="method" value="X-ray"/>
    <property type="resolution" value="3.90 A"/>
    <property type="chains" value="QR/XR=1-88"/>
</dbReference>
<dbReference type="PDB" id="5W4K">
    <property type="method" value="X-ray"/>
    <property type="resolution" value="2.70 A"/>
    <property type="chains" value="1r/2r=1-88"/>
</dbReference>
<dbReference type="PDB" id="5WIS">
    <property type="method" value="X-ray"/>
    <property type="resolution" value="2.70 A"/>
    <property type="chains" value="1r/2r=1-88"/>
</dbReference>
<dbReference type="PDB" id="5WIT">
    <property type="method" value="X-ray"/>
    <property type="resolution" value="2.60 A"/>
    <property type="chains" value="1r/2r=1-88"/>
</dbReference>
<dbReference type="PDB" id="5WNP">
    <property type="method" value="X-ray"/>
    <property type="resolution" value="3.30 A"/>
    <property type="chains" value="R=16-88"/>
</dbReference>
<dbReference type="PDB" id="5WNQ">
    <property type="method" value="X-ray"/>
    <property type="resolution" value="3.50 A"/>
    <property type="chains" value="R=19-88"/>
</dbReference>
<dbReference type="PDB" id="5WNR">
    <property type="method" value="X-ray"/>
    <property type="resolution" value="3.50 A"/>
    <property type="chains" value="R=19-88"/>
</dbReference>
<dbReference type="PDB" id="5WNS">
    <property type="method" value="X-ray"/>
    <property type="resolution" value="3.50 A"/>
    <property type="chains" value="R=19-88"/>
</dbReference>
<dbReference type="PDB" id="5WNT">
    <property type="method" value="X-ray"/>
    <property type="resolution" value="3.30 A"/>
    <property type="chains" value="R=16-88"/>
</dbReference>
<dbReference type="PDB" id="5WNU">
    <property type="method" value="X-ray"/>
    <property type="resolution" value="3.40 A"/>
    <property type="chains" value="R=16-88"/>
</dbReference>
<dbReference type="PDB" id="5WNV">
    <property type="method" value="X-ray"/>
    <property type="resolution" value="3.30 A"/>
    <property type="chains" value="R=16-88"/>
</dbReference>
<dbReference type="PDB" id="5ZLU">
    <property type="method" value="EM"/>
    <property type="resolution" value="3.60 A"/>
    <property type="chains" value="B=16-88"/>
</dbReference>
<dbReference type="PDB" id="6BUW">
    <property type="method" value="X-ray"/>
    <property type="resolution" value="3.50 A"/>
    <property type="chains" value="QR/XR=1-88"/>
</dbReference>
<dbReference type="PDB" id="6BZ6">
    <property type="method" value="X-ray"/>
    <property type="resolution" value="3.18 A"/>
    <property type="chains" value="QR/XR=1-88"/>
</dbReference>
<dbReference type="PDB" id="6BZ7">
    <property type="method" value="X-ray"/>
    <property type="resolution" value="3.68 A"/>
    <property type="chains" value="QR/XR=1-88"/>
</dbReference>
<dbReference type="PDB" id="6BZ8">
    <property type="method" value="X-ray"/>
    <property type="resolution" value="3.74 A"/>
    <property type="chains" value="QR/XR=1-88"/>
</dbReference>
<dbReference type="PDB" id="6C5L">
    <property type="method" value="X-ray"/>
    <property type="resolution" value="3.20 A"/>
    <property type="chains" value="AR/CR=1-88"/>
</dbReference>
<dbReference type="PDB" id="6CAE">
    <property type="method" value="X-ray"/>
    <property type="resolution" value="2.60 A"/>
    <property type="chains" value="1r/2r=1-88"/>
</dbReference>
<dbReference type="PDB" id="6CAO">
    <property type="method" value="X-ray"/>
    <property type="resolution" value="3.45 A"/>
    <property type="chains" value="R=16-88"/>
</dbReference>
<dbReference type="PDB" id="6CAP">
    <property type="method" value="X-ray"/>
    <property type="resolution" value="3.40 A"/>
    <property type="chains" value="R=19-88"/>
</dbReference>
<dbReference type="PDB" id="6CAQ">
    <property type="method" value="X-ray"/>
    <property type="resolution" value="3.40 A"/>
    <property type="chains" value="R=19-88"/>
</dbReference>
<dbReference type="PDB" id="6CAR">
    <property type="method" value="X-ray"/>
    <property type="resolution" value="3.40 A"/>
    <property type="chains" value="R=2-88"/>
</dbReference>
<dbReference type="PDB" id="6CAS">
    <property type="method" value="X-ray"/>
    <property type="resolution" value="3.50 A"/>
    <property type="chains" value="R=2-88"/>
</dbReference>
<dbReference type="PDB" id="6CFJ">
    <property type="method" value="X-ray"/>
    <property type="resolution" value="2.80 A"/>
    <property type="chains" value="1r/2r=1-88"/>
</dbReference>
<dbReference type="PDB" id="6CFK">
    <property type="method" value="X-ray"/>
    <property type="resolution" value="2.70 A"/>
    <property type="chains" value="1r/2r=1-88"/>
</dbReference>
<dbReference type="PDB" id="6CFL">
    <property type="method" value="X-ray"/>
    <property type="resolution" value="2.60 A"/>
    <property type="chains" value="1r/2r=1-88"/>
</dbReference>
<dbReference type="PDB" id="6CZR">
    <property type="method" value="X-ray"/>
    <property type="resolution" value="3.14 A"/>
    <property type="chains" value="1r/2r=20-87"/>
</dbReference>
<dbReference type="PDB" id="6DTI">
    <property type="method" value="X-ray"/>
    <property type="resolution" value="3.54 A"/>
    <property type="chains" value="R=1-88"/>
</dbReference>
<dbReference type="PDB" id="6FKR">
    <property type="method" value="X-ray"/>
    <property type="resolution" value="3.20 A"/>
    <property type="chains" value="1r/2r=20-87"/>
</dbReference>
<dbReference type="PDB" id="6GSJ">
    <property type="method" value="X-ray"/>
    <property type="resolution" value="2.96 A"/>
    <property type="chains" value="9A/9I=1-88"/>
</dbReference>
<dbReference type="PDB" id="6GSK">
    <property type="method" value="X-ray"/>
    <property type="resolution" value="3.36 A"/>
    <property type="chains" value="9A/9I=1-88"/>
</dbReference>
<dbReference type="PDB" id="6GSL">
    <property type="method" value="X-ray"/>
    <property type="resolution" value="3.16 A"/>
    <property type="chains" value="9A/9I=1-88"/>
</dbReference>
<dbReference type="PDB" id="6GZQ">
    <property type="method" value="EM"/>
    <property type="resolution" value="3.28 A"/>
    <property type="chains" value="R2=27-88"/>
</dbReference>
<dbReference type="PDB" id="6GZX">
    <property type="method" value="EM"/>
    <property type="resolution" value="4.57 A"/>
    <property type="chains" value="R3/R4=27-88"/>
</dbReference>
<dbReference type="PDB" id="6GZZ">
    <property type="method" value="EM"/>
    <property type="resolution" value="4.13 A"/>
    <property type="chains" value="R3/R4=27-88"/>
</dbReference>
<dbReference type="PDB" id="6MKN">
    <property type="method" value="X-ray"/>
    <property type="resolution" value="3.46 A"/>
    <property type="chains" value="R=1-88"/>
</dbReference>
<dbReference type="PDB" id="6MPF">
    <property type="method" value="X-ray"/>
    <property type="resolution" value="3.33 A"/>
    <property type="chains" value="R=16-88"/>
</dbReference>
<dbReference type="PDB" id="6MPI">
    <property type="method" value="X-ray"/>
    <property type="resolution" value="3.33 A"/>
    <property type="chains" value="R=1-88"/>
</dbReference>
<dbReference type="PDB" id="6N9E">
    <property type="method" value="X-ray"/>
    <property type="resolution" value="3.70 A"/>
    <property type="chains" value="1r/2r=1-88"/>
</dbReference>
<dbReference type="PDB" id="6N9F">
    <property type="method" value="X-ray"/>
    <property type="resolution" value="3.70 A"/>
    <property type="chains" value="1r/2r=1-88"/>
</dbReference>
<dbReference type="PDB" id="6ND5">
    <property type="method" value="X-ray"/>
    <property type="resolution" value="2.60 A"/>
    <property type="chains" value="1r/2r=1-88"/>
</dbReference>
<dbReference type="PDB" id="6ND6">
    <property type="method" value="X-ray"/>
    <property type="resolution" value="2.85 A"/>
    <property type="chains" value="1r/2r=1-88"/>
</dbReference>
<dbReference type="PDB" id="6NDK">
    <property type="method" value="X-ray"/>
    <property type="resolution" value="3.64 A"/>
    <property type="chains" value="QR/XR=1-88"/>
</dbReference>
<dbReference type="PDB" id="6NSH">
    <property type="method" value="X-ray"/>
    <property type="resolution" value="3.40 A"/>
    <property type="chains" value="QR/XR=1-88"/>
</dbReference>
<dbReference type="PDB" id="6NTA">
    <property type="method" value="X-ray"/>
    <property type="resolution" value="3.10 A"/>
    <property type="chains" value="QR/XR=1-88"/>
</dbReference>
<dbReference type="PDB" id="6NUO">
    <property type="method" value="X-ray"/>
    <property type="resolution" value="3.20 A"/>
    <property type="chains" value="QR/XR=1-88"/>
</dbReference>
<dbReference type="PDB" id="6NWY">
    <property type="method" value="X-ray"/>
    <property type="resolution" value="3.50 A"/>
    <property type="chains" value="QR/XR=1-88"/>
</dbReference>
<dbReference type="PDB" id="6NY6">
    <property type="method" value="X-ray"/>
    <property type="resolution" value="3.74 A"/>
    <property type="chains" value="R=1-88"/>
</dbReference>
<dbReference type="PDB" id="6O3M">
    <property type="method" value="X-ray"/>
    <property type="resolution" value="3.97 A"/>
    <property type="chains" value="QR/XR=1-88"/>
</dbReference>
<dbReference type="PDB" id="6O97">
    <property type="method" value="X-ray"/>
    <property type="resolution" value="2.75 A"/>
    <property type="chains" value="1r/2r=1-88"/>
</dbReference>
<dbReference type="PDB" id="6OF1">
    <property type="method" value="X-ray"/>
    <property type="resolution" value="2.80 A"/>
    <property type="chains" value="1r/2r=1-88"/>
</dbReference>
<dbReference type="PDB" id="6OF6">
    <property type="method" value="X-ray"/>
    <property type="resolution" value="3.20 A"/>
    <property type="chains" value="QR/XR=1-88"/>
</dbReference>
<dbReference type="PDB" id="6OJ2">
    <property type="method" value="X-ray"/>
    <property type="resolution" value="3.20 A"/>
    <property type="chains" value="QR/XR=1-88"/>
</dbReference>
<dbReference type="PDB" id="6OPE">
    <property type="method" value="X-ray"/>
    <property type="resolution" value="3.10 A"/>
    <property type="chains" value="QR/XR=1-88"/>
</dbReference>
<dbReference type="PDB" id="6ORD">
    <property type="method" value="X-ray"/>
    <property type="resolution" value="3.10 A"/>
    <property type="chains" value="QR/XR=1-88"/>
</dbReference>
<dbReference type="PDB" id="6OSI">
    <property type="method" value="X-ray"/>
    <property type="resolution" value="4.14 A"/>
    <property type="chains" value="QR/XR=1-88"/>
</dbReference>
<dbReference type="PDB" id="6OTR">
    <property type="method" value="X-ray"/>
    <property type="resolution" value="3.12 A"/>
    <property type="chains" value="QR/XR=1-88"/>
</dbReference>
<dbReference type="PDB" id="6OXA">
    <property type="method" value="X-ray"/>
    <property type="resolution" value="3.25 A"/>
    <property type="chains" value="QR/XR=1-88"/>
</dbReference>
<dbReference type="PDB" id="6OXI">
    <property type="method" value="X-ray"/>
    <property type="resolution" value="3.50 A"/>
    <property type="chains" value="QR/XR=1-88"/>
</dbReference>
<dbReference type="PDB" id="6Q95">
    <property type="method" value="EM"/>
    <property type="resolution" value="3.70 A"/>
    <property type="chains" value="w=19-88"/>
</dbReference>
<dbReference type="PDB" id="6QNQ">
    <property type="method" value="X-ray"/>
    <property type="resolution" value="3.50 A"/>
    <property type="chains" value="9A/9I=1-88"/>
</dbReference>
<dbReference type="PDB" id="6QNR">
    <property type="method" value="X-ray"/>
    <property type="resolution" value="3.10 A"/>
    <property type="chains" value="9A/9I=1-88"/>
</dbReference>
<dbReference type="PDB" id="6UCQ">
    <property type="method" value="X-ray"/>
    <property type="resolution" value="3.50 A"/>
    <property type="chains" value="1r/2r=1-88"/>
</dbReference>
<dbReference type="PDB" id="6UO1">
    <property type="method" value="X-ray"/>
    <property type="resolution" value="2.95 A"/>
    <property type="chains" value="1r/2r=1-88"/>
</dbReference>
<dbReference type="PDB" id="6XHV">
    <property type="method" value="X-ray"/>
    <property type="resolution" value="2.40 A"/>
    <property type="chains" value="1r/2r=1-88"/>
</dbReference>
<dbReference type="PDB" id="6XHW">
    <property type="method" value="X-ray"/>
    <property type="resolution" value="2.50 A"/>
    <property type="chains" value="1r/2r=1-88"/>
</dbReference>
<dbReference type="PDB" id="6XHX">
    <property type="method" value="X-ray"/>
    <property type="resolution" value="2.55 A"/>
    <property type="chains" value="1r/2r=1-88"/>
</dbReference>
<dbReference type="PDB" id="6XHY">
    <property type="method" value="X-ray"/>
    <property type="resolution" value="2.60 A"/>
    <property type="chains" value="1r/2r=1-88"/>
</dbReference>
<dbReference type="PDB" id="6XQD">
    <property type="method" value="X-ray"/>
    <property type="resolution" value="2.80 A"/>
    <property type="chains" value="1r/2r=1-88"/>
</dbReference>
<dbReference type="PDB" id="6XQE">
    <property type="method" value="X-ray"/>
    <property type="resolution" value="3.00 A"/>
    <property type="chains" value="1r/2r=1-88"/>
</dbReference>
<dbReference type="PDB" id="7AZO">
    <property type="method" value="X-ray"/>
    <property type="resolution" value="3.30 A"/>
    <property type="chains" value="S18A/S18B=1-88"/>
</dbReference>
<dbReference type="PDB" id="7AZS">
    <property type="method" value="X-ray"/>
    <property type="resolution" value="3.10 A"/>
    <property type="chains" value="S18A/S18B=1-88"/>
</dbReference>
<dbReference type="PDB" id="7DUG">
    <property type="method" value="X-ray"/>
    <property type="resolution" value="3.75 A"/>
    <property type="chains" value="R=1-88"/>
</dbReference>
<dbReference type="PDB" id="7DUH">
    <property type="method" value="X-ray"/>
    <property type="resolution" value="3.75 A"/>
    <property type="chains" value="R=1-88"/>
</dbReference>
<dbReference type="PDB" id="7DUI">
    <property type="method" value="X-ray"/>
    <property type="resolution" value="3.62 A"/>
    <property type="chains" value="R=1-88"/>
</dbReference>
<dbReference type="PDB" id="7DUJ">
    <property type="method" value="X-ray"/>
    <property type="resolution" value="3.75 A"/>
    <property type="chains" value="R=1-88"/>
</dbReference>
<dbReference type="PDB" id="7DUK">
    <property type="method" value="X-ray"/>
    <property type="resolution" value="3.60 A"/>
    <property type="chains" value="R=1-88"/>
</dbReference>
<dbReference type="PDB" id="7DUL">
    <property type="method" value="X-ray"/>
    <property type="resolution" value="3.62 A"/>
    <property type="chains" value="R=1-88"/>
</dbReference>
<dbReference type="PDB" id="7JQL">
    <property type="method" value="X-ray"/>
    <property type="resolution" value="3.00 A"/>
    <property type="chains" value="1r/2r=1-88"/>
</dbReference>
<dbReference type="PDB" id="7JQM">
    <property type="method" value="X-ray"/>
    <property type="resolution" value="3.05 A"/>
    <property type="chains" value="1r/2r=1-88"/>
</dbReference>
<dbReference type="PDB" id="7LH5">
    <property type="method" value="X-ray"/>
    <property type="resolution" value="3.27 A"/>
    <property type="chains" value="AR/CR=1-88"/>
</dbReference>
<dbReference type="PDB" id="7MD7">
    <property type="method" value="X-ray"/>
    <property type="resolution" value="2.80 A"/>
    <property type="chains" value="1r/2r=1-88"/>
</dbReference>
<dbReference type="PDB" id="7RQ8">
    <property type="method" value="X-ray"/>
    <property type="resolution" value="2.50 A"/>
    <property type="chains" value="1r/2r=1-88"/>
</dbReference>
<dbReference type="PDB" id="7RQ9">
    <property type="method" value="X-ray"/>
    <property type="resolution" value="2.60 A"/>
    <property type="chains" value="1r/2r=1-88"/>
</dbReference>
<dbReference type="PDB" id="7RQA">
    <property type="method" value="X-ray"/>
    <property type="resolution" value="2.40 A"/>
    <property type="chains" value="1r/2r=1-88"/>
</dbReference>
<dbReference type="PDB" id="7RQB">
    <property type="method" value="X-ray"/>
    <property type="resolution" value="2.45 A"/>
    <property type="chains" value="1r/2r=1-88"/>
</dbReference>
<dbReference type="PDB" id="7RQC">
    <property type="method" value="X-ray"/>
    <property type="resolution" value="2.50 A"/>
    <property type="chains" value="1r/2r=1-88"/>
</dbReference>
<dbReference type="PDB" id="7RQD">
    <property type="method" value="X-ray"/>
    <property type="resolution" value="2.50 A"/>
    <property type="chains" value="1r/2r=1-88"/>
</dbReference>
<dbReference type="PDB" id="7RQE">
    <property type="method" value="X-ray"/>
    <property type="resolution" value="2.40 A"/>
    <property type="chains" value="1r/2r=1-88"/>
</dbReference>
<dbReference type="PDB" id="7U2H">
    <property type="method" value="X-ray"/>
    <property type="resolution" value="2.55 A"/>
    <property type="chains" value="1r/2r=1-88"/>
</dbReference>
<dbReference type="PDB" id="7U2I">
    <property type="method" value="X-ray"/>
    <property type="resolution" value="2.55 A"/>
    <property type="chains" value="1r/2r=1-88"/>
</dbReference>
<dbReference type="PDB" id="7U2J">
    <property type="method" value="X-ray"/>
    <property type="resolution" value="2.55 A"/>
    <property type="chains" value="1r/2r=1-88"/>
</dbReference>
<dbReference type="PDB" id="7V2L">
    <property type="method" value="EM"/>
    <property type="resolution" value="3.30 A"/>
    <property type="chains" value="R=1-88"/>
</dbReference>
<dbReference type="PDB" id="7V2M">
    <property type="method" value="EM"/>
    <property type="resolution" value="3.40 A"/>
    <property type="chains" value="R=1-88"/>
</dbReference>
<dbReference type="PDB" id="7V2N">
    <property type="method" value="EM"/>
    <property type="resolution" value="3.60 A"/>
    <property type="chains" value="R=1-88"/>
</dbReference>
<dbReference type="PDB" id="7V2O">
    <property type="method" value="EM"/>
    <property type="resolution" value="3.50 A"/>
    <property type="chains" value="R=1-88"/>
</dbReference>
<dbReference type="PDB" id="7V2P">
    <property type="method" value="EM"/>
    <property type="resolution" value="3.30 A"/>
    <property type="chains" value="R=1-88"/>
</dbReference>
<dbReference type="PDB" id="7V2Q">
    <property type="method" value="EM"/>
    <property type="resolution" value="3.24 A"/>
    <property type="chains" value="R=1-88"/>
</dbReference>
<dbReference type="PDB" id="8CVJ">
    <property type="method" value="X-ray"/>
    <property type="resolution" value="2.40 A"/>
    <property type="chains" value="1r/2r=1-88"/>
</dbReference>
<dbReference type="PDB" id="8CVK">
    <property type="method" value="X-ray"/>
    <property type="resolution" value="2.50 A"/>
    <property type="chains" value="1r/2r=1-88"/>
</dbReference>
<dbReference type="PDB" id="8CVL">
    <property type="method" value="X-ray"/>
    <property type="resolution" value="2.30 A"/>
    <property type="chains" value="1r/2r=1-88"/>
</dbReference>
<dbReference type="PDB" id="8EKB">
    <property type="method" value="X-ray"/>
    <property type="resolution" value="2.70 A"/>
    <property type="chains" value="1r/2r=1-88"/>
</dbReference>
<dbReference type="PDB" id="8EV6">
    <property type="method" value="X-ray"/>
    <property type="resolution" value="2.95 A"/>
    <property type="chains" value="1r/2r=1-88"/>
</dbReference>
<dbReference type="PDB" id="8EV7">
    <property type="method" value="X-ray"/>
    <property type="resolution" value="2.89 A"/>
    <property type="chains" value="1r/2r=1-88"/>
</dbReference>
<dbReference type="PDB" id="8FC1">
    <property type="method" value="X-ray"/>
    <property type="resolution" value="2.50 A"/>
    <property type="chains" value="1r/2r=1-88"/>
</dbReference>
<dbReference type="PDB" id="8FC2">
    <property type="method" value="X-ray"/>
    <property type="resolution" value="2.50 A"/>
    <property type="chains" value="1r/2r=1-88"/>
</dbReference>
<dbReference type="PDB" id="8FC3">
    <property type="method" value="X-ray"/>
    <property type="resolution" value="2.60 A"/>
    <property type="chains" value="1r/2r=1-88"/>
</dbReference>
<dbReference type="PDB" id="8FC4">
    <property type="method" value="X-ray"/>
    <property type="resolution" value="2.45 A"/>
    <property type="chains" value="1r/2r=1-88"/>
</dbReference>
<dbReference type="PDB" id="8FC5">
    <property type="method" value="X-ray"/>
    <property type="resolution" value="2.65 A"/>
    <property type="chains" value="1r/2r=1-88"/>
</dbReference>
<dbReference type="PDB" id="8FC6">
    <property type="method" value="X-ray"/>
    <property type="resolution" value="2.35 A"/>
    <property type="chains" value="1r/2r=1-88"/>
</dbReference>
<dbReference type="PDB" id="8FOM">
    <property type="method" value="X-ray"/>
    <property type="resolution" value="3.58 A"/>
    <property type="chains" value="QR/XR=1-88"/>
</dbReference>
<dbReference type="PDB" id="8FON">
    <property type="method" value="X-ray"/>
    <property type="resolution" value="3.64 A"/>
    <property type="chains" value="QR/XR=1-88"/>
</dbReference>
<dbReference type="PDB" id="8G29">
    <property type="method" value="X-ray"/>
    <property type="resolution" value="2.55 A"/>
    <property type="chains" value="1r/2r=1-88"/>
</dbReference>
<dbReference type="PDB" id="8G2A">
    <property type="method" value="X-ray"/>
    <property type="resolution" value="2.45 A"/>
    <property type="chains" value="1r/2r=1-88"/>
</dbReference>
<dbReference type="PDB" id="8G2B">
    <property type="method" value="X-ray"/>
    <property type="resolution" value="2.55 A"/>
    <property type="chains" value="1r/2r=1-88"/>
</dbReference>
<dbReference type="PDB" id="8G2C">
    <property type="method" value="X-ray"/>
    <property type="resolution" value="2.65 A"/>
    <property type="chains" value="1r/2r=1-88"/>
</dbReference>
<dbReference type="PDB" id="8G2D">
    <property type="method" value="X-ray"/>
    <property type="resolution" value="2.70 A"/>
    <property type="chains" value="1r/2r=1-88"/>
</dbReference>
<dbReference type="PDB" id="8T8B">
    <property type="method" value="X-ray"/>
    <property type="resolution" value="2.65 A"/>
    <property type="chains" value="1r/2r=1-88"/>
</dbReference>
<dbReference type="PDB" id="8T8C">
    <property type="method" value="X-ray"/>
    <property type="resolution" value="2.60 A"/>
    <property type="chains" value="1r/2r=1-88"/>
</dbReference>
<dbReference type="PDB" id="8UD6">
    <property type="method" value="X-ray"/>
    <property type="resolution" value="2.70 A"/>
    <property type="chains" value="1r/2r=1-88"/>
</dbReference>
<dbReference type="PDB" id="8UD7">
    <property type="method" value="X-ray"/>
    <property type="resolution" value="2.55 A"/>
    <property type="chains" value="1r/2r=1-88"/>
</dbReference>
<dbReference type="PDB" id="8UD8">
    <property type="method" value="X-ray"/>
    <property type="resolution" value="2.60 A"/>
    <property type="chains" value="1r/2r=1-88"/>
</dbReference>
<dbReference type="PDB" id="8UVR">
    <property type="method" value="X-ray"/>
    <property type="resolution" value="2.60 A"/>
    <property type="chains" value="1r/2r=1-88"/>
</dbReference>
<dbReference type="PDB" id="8UVS">
    <property type="method" value="X-ray"/>
    <property type="resolution" value="2.75 A"/>
    <property type="chains" value="1r/2r=1-88"/>
</dbReference>
<dbReference type="PDB" id="8VTU">
    <property type="method" value="X-ray"/>
    <property type="resolution" value="2.40 A"/>
    <property type="chains" value="1r/2r=1-88"/>
</dbReference>
<dbReference type="PDB" id="8VTV">
    <property type="method" value="X-ray"/>
    <property type="resolution" value="2.55 A"/>
    <property type="chains" value="1r/2r=1-88"/>
</dbReference>
<dbReference type="PDB" id="8VTW">
    <property type="method" value="X-ray"/>
    <property type="resolution" value="2.35 A"/>
    <property type="chains" value="1r/2r=1-88"/>
</dbReference>
<dbReference type="PDB" id="8VTX">
    <property type="method" value="X-ray"/>
    <property type="resolution" value="2.40 A"/>
    <property type="chains" value="1r/2r=1-88"/>
</dbReference>
<dbReference type="PDB" id="8VTY">
    <property type="method" value="X-ray"/>
    <property type="resolution" value="2.60 A"/>
    <property type="chains" value="1r/2r=1-88"/>
</dbReference>
<dbReference type="PDB" id="9B00">
    <property type="method" value="X-ray"/>
    <property type="resolution" value="2.80 A"/>
    <property type="chains" value="1r/2r=1-88"/>
</dbReference>
<dbReference type="PDB" id="9D0J">
    <property type="method" value="X-ray"/>
    <property type="resolution" value="2.50 A"/>
    <property type="chains" value="1r/2r=1-88"/>
</dbReference>
<dbReference type="PDB" id="9D7R">
    <property type="method" value="X-ray"/>
    <property type="resolution" value="2.70 A"/>
    <property type="chains" value="1r/2r=1-88"/>
</dbReference>
<dbReference type="PDB" id="9D7S">
    <property type="method" value="X-ray"/>
    <property type="resolution" value="2.85 A"/>
    <property type="chains" value="1r/2r=1-88"/>
</dbReference>
<dbReference type="PDB" id="9D7T">
    <property type="method" value="X-ray"/>
    <property type="resolution" value="2.70 A"/>
    <property type="chains" value="1r/2r=1-88"/>
</dbReference>
<dbReference type="PDB" id="9DFC">
    <property type="method" value="X-ray"/>
    <property type="resolution" value="2.50 A"/>
    <property type="chains" value="1r/2r=1-88"/>
</dbReference>
<dbReference type="PDB" id="9DFD">
    <property type="method" value="X-ray"/>
    <property type="resolution" value="2.60 A"/>
    <property type="chains" value="1r/2r=1-88"/>
</dbReference>
<dbReference type="PDB" id="9DFE">
    <property type="method" value="X-ray"/>
    <property type="resolution" value="2.60 A"/>
    <property type="chains" value="1r/2r=1-88"/>
</dbReference>
<dbReference type="PDBsum" id="1FJG"/>
<dbReference type="PDBsum" id="1FKA"/>
<dbReference type="PDBsum" id="1G1X"/>
<dbReference type="PDBsum" id="1HNW"/>
<dbReference type="PDBsum" id="1HNX"/>
<dbReference type="PDBsum" id="1HNZ"/>
<dbReference type="PDBsum" id="1HR0"/>
<dbReference type="PDBsum" id="1I94"/>
<dbReference type="PDBsum" id="1I95"/>
<dbReference type="PDBsum" id="1I96"/>
<dbReference type="PDBsum" id="1I97"/>
<dbReference type="PDBsum" id="1IBK"/>
<dbReference type="PDBsum" id="1IBL"/>
<dbReference type="PDBsum" id="1IBM"/>
<dbReference type="PDBsum" id="1J5E"/>
<dbReference type="PDBsum" id="1JGO"/>
<dbReference type="PDBsum" id="1JGP"/>
<dbReference type="PDBsum" id="1JGQ"/>
<dbReference type="PDBsum" id="1ML5"/>
<dbReference type="PDBsum" id="1N32"/>
<dbReference type="PDBsum" id="1N33"/>
<dbReference type="PDBsum" id="1N34"/>
<dbReference type="PDBsum" id="1N36"/>
<dbReference type="PDBsum" id="1VVJ"/>
<dbReference type="PDBsum" id="1VY4"/>
<dbReference type="PDBsum" id="1VY5"/>
<dbReference type="PDBsum" id="1VY6"/>
<dbReference type="PDBsum" id="1VY7"/>
<dbReference type="PDBsum" id="1X18"/>
<dbReference type="PDBsum" id="1XMO"/>
<dbReference type="PDBsum" id="1XMQ"/>
<dbReference type="PDBsum" id="1XNQ"/>
<dbReference type="PDBsum" id="1XNR"/>
<dbReference type="PDBsum" id="2E5L"/>
<dbReference type="PDBsum" id="2F4V"/>
<dbReference type="PDBsum" id="2HHH"/>
<dbReference type="PDBsum" id="2UU9"/>
<dbReference type="PDBsum" id="2UUA"/>
<dbReference type="PDBsum" id="2UUB"/>
<dbReference type="PDBsum" id="2UUC"/>
<dbReference type="PDBsum" id="2UXB"/>
<dbReference type="PDBsum" id="2UXC"/>
<dbReference type="PDBsum" id="2UXD"/>
<dbReference type="PDBsum" id="2ZM6"/>
<dbReference type="PDBsum" id="3OTO"/>
<dbReference type="PDBsum" id="3T1H"/>
<dbReference type="PDBsum" id="3T1Y"/>
<dbReference type="PDBsum" id="4AQY"/>
<dbReference type="PDBsum" id="4B3M"/>
<dbReference type="PDBsum" id="4B3R"/>
<dbReference type="PDBsum" id="4B3S"/>
<dbReference type="PDBsum" id="4B3T"/>
<dbReference type="PDBsum" id="4DR1"/>
<dbReference type="PDBsum" id="4DR2"/>
<dbReference type="PDBsum" id="4DR3"/>
<dbReference type="PDBsum" id="4DR4"/>
<dbReference type="PDBsum" id="4DR5"/>
<dbReference type="PDBsum" id="4DR6"/>
<dbReference type="PDBsum" id="4DR7"/>
<dbReference type="PDBsum" id="4DUY"/>
<dbReference type="PDBsum" id="4DUZ"/>
<dbReference type="PDBsum" id="4DV0"/>
<dbReference type="PDBsum" id="4DV1"/>
<dbReference type="PDBsum" id="4DV2"/>
<dbReference type="PDBsum" id="4DV3"/>
<dbReference type="PDBsum" id="4DV4"/>
<dbReference type="PDBsum" id="4DV5"/>
<dbReference type="PDBsum" id="4DV6"/>
<dbReference type="PDBsum" id="4DV7"/>
<dbReference type="PDBsum" id="4GKJ"/>
<dbReference type="PDBsum" id="4GKK"/>
<dbReference type="PDBsum" id="4JI0"/>
<dbReference type="PDBsum" id="4JI1"/>
<dbReference type="PDBsum" id="4JI2"/>
<dbReference type="PDBsum" id="4JI3"/>
<dbReference type="PDBsum" id="4JI4"/>
<dbReference type="PDBsum" id="4JI5"/>
<dbReference type="PDBsum" id="4JI6"/>
<dbReference type="PDBsum" id="4JI7"/>
<dbReference type="PDBsum" id="4JI8"/>
<dbReference type="PDBsum" id="4JV5"/>
<dbReference type="PDBsum" id="4JYA"/>
<dbReference type="PDBsum" id="4K0K"/>
<dbReference type="PDBsum" id="4KHP"/>
<dbReference type="PDBsum" id="4L47"/>
<dbReference type="PDBsum" id="4L71"/>
<dbReference type="PDBsum" id="4LEL"/>
<dbReference type="PDBsum" id="4LF4"/>
<dbReference type="PDBsum" id="4LF5"/>
<dbReference type="PDBsum" id="4LF6"/>
<dbReference type="PDBsum" id="4LF7"/>
<dbReference type="PDBsum" id="4LF8"/>
<dbReference type="PDBsum" id="4LF9"/>
<dbReference type="PDBsum" id="4LFA"/>
<dbReference type="PDBsum" id="4LFB"/>
<dbReference type="PDBsum" id="4LFC"/>
<dbReference type="PDBsum" id="4LFZ"/>
<dbReference type="PDBsum" id="4LNT"/>
<dbReference type="PDBsum" id="4LSK"/>
<dbReference type="PDBsum" id="4LT8"/>
<dbReference type="PDBsum" id="4NXM"/>
<dbReference type="PDBsum" id="4NXN"/>
<dbReference type="PDBsum" id="4OX9"/>
<dbReference type="PDBsum" id="4P6F"/>
<dbReference type="PDBsum" id="4P70"/>
<dbReference type="PDBsum" id="4TUA"/>
<dbReference type="PDBsum" id="4TUB"/>
<dbReference type="PDBsum" id="4TUC"/>
<dbReference type="PDBsum" id="4TUD"/>
<dbReference type="PDBsum" id="4TUE"/>
<dbReference type="PDBsum" id="4V42"/>
<dbReference type="PDBsum" id="4V49"/>
<dbReference type="PDBsum" id="4V4A"/>
<dbReference type="PDBsum" id="4V4G"/>
<dbReference type="PDBsum" id="4V4I"/>
<dbReference type="PDBsum" id="4V4P"/>
<dbReference type="PDBsum" id="4V4R"/>
<dbReference type="PDBsum" id="4V4S"/>
<dbReference type="PDBsum" id="4V4T"/>
<dbReference type="PDBsum" id="4V4X"/>
<dbReference type="PDBsum" id="4V4Y"/>
<dbReference type="PDBsum" id="4V4Z"/>
<dbReference type="PDBsum" id="4V51"/>
<dbReference type="PDBsum" id="4V5A"/>
<dbReference type="PDBsum" id="4V5C"/>
<dbReference type="PDBsum" id="4V5D"/>
<dbReference type="PDBsum" id="4V5E"/>
<dbReference type="PDBsum" id="4V5F"/>
<dbReference type="PDBsum" id="4V5G"/>
<dbReference type="PDBsum" id="4V5J"/>
<dbReference type="PDBsum" id="4V5K"/>
<dbReference type="PDBsum" id="4V5L"/>
<dbReference type="PDBsum" id="4V5M"/>
<dbReference type="PDBsum" id="4V5N"/>
<dbReference type="PDBsum" id="4V5P"/>
<dbReference type="PDBsum" id="4V5Q"/>
<dbReference type="PDBsum" id="4V5R"/>
<dbReference type="PDBsum" id="4V5S"/>
<dbReference type="PDBsum" id="4V68"/>
<dbReference type="PDBsum" id="4V6A"/>
<dbReference type="PDBsum" id="4V6F"/>
<dbReference type="PDBsum" id="4V6G"/>
<dbReference type="PDBsum" id="4V7J"/>
<dbReference type="PDBsum" id="4V7K"/>
<dbReference type="PDBsum" id="4V7L"/>
<dbReference type="PDBsum" id="4V7M"/>
<dbReference type="PDBsum" id="4V7W"/>
<dbReference type="PDBsum" id="4V7X"/>
<dbReference type="PDBsum" id="4V7Y"/>
<dbReference type="PDBsum" id="4V7Z"/>
<dbReference type="PDBsum" id="4V87"/>
<dbReference type="PDBsum" id="4V8A"/>
<dbReference type="PDBsum" id="4V8B"/>
<dbReference type="PDBsum" id="4V8C"/>
<dbReference type="PDBsum" id="4V8D"/>
<dbReference type="PDBsum" id="4V8E"/>
<dbReference type="PDBsum" id="4V8F"/>
<dbReference type="PDBsum" id="4V8G"/>
<dbReference type="PDBsum" id="4V8H"/>
<dbReference type="PDBsum" id="4V8I"/>
<dbReference type="PDBsum" id="4V8J"/>
<dbReference type="PDBsum" id="4V8N"/>
<dbReference type="PDBsum" id="4V8O"/>
<dbReference type="PDBsum" id="4V8Q"/>
<dbReference type="PDBsum" id="4V8U"/>
<dbReference type="PDBsum" id="4V8X"/>
<dbReference type="PDBsum" id="4V90"/>
<dbReference type="PDBsum" id="4V95"/>
<dbReference type="PDBsum" id="4V97"/>
<dbReference type="PDBsum" id="4V9A"/>
<dbReference type="PDBsum" id="4V9B"/>
<dbReference type="PDBsum" id="4V9H"/>
<dbReference type="PDBsum" id="4V9I"/>
<dbReference type="PDBsum" id="4V9R"/>
<dbReference type="PDBsum" id="4V9S"/>
<dbReference type="PDBsum" id="4W2E"/>
<dbReference type="PDBsum" id="4W2F"/>
<dbReference type="PDBsum" id="4W2G"/>
<dbReference type="PDBsum" id="4W2H"/>
<dbReference type="PDBsum" id="4W2I"/>
<dbReference type="PDBsum" id="4W4G"/>
<dbReference type="PDBsum" id="4WPO"/>
<dbReference type="PDBsum" id="4WQ1"/>
<dbReference type="PDBsum" id="4WQF"/>
<dbReference type="PDBsum" id="4WQR"/>
<dbReference type="PDBsum" id="4WQU"/>
<dbReference type="PDBsum" id="4WQY"/>
<dbReference type="PDBsum" id="4WR6"/>
<dbReference type="PDBsum" id="4WRA"/>
<dbReference type="PDBsum" id="4WRO"/>
<dbReference type="PDBsum" id="4WSD"/>
<dbReference type="PDBsum" id="4WSM"/>
<dbReference type="PDBsum" id="4WT1"/>
<dbReference type="PDBsum" id="4WT8"/>
<dbReference type="PDBsum" id="4WU1"/>
<dbReference type="PDBsum" id="4WZD"/>
<dbReference type="PDBsum" id="4WZO"/>
<dbReference type="PDBsum" id="4X62"/>
<dbReference type="PDBsum" id="4X64"/>
<dbReference type="PDBsum" id="4X65"/>
<dbReference type="PDBsum" id="4X66"/>
<dbReference type="PDBsum" id="4Y4O"/>
<dbReference type="PDBsum" id="4Y4P"/>
<dbReference type="PDBsum" id="4YHH"/>
<dbReference type="PDBsum" id="4YPB"/>
<dbReference type="PDBsum" id="4YY3"/>
<dbReference type="PDBsum" id="4YZV"/>
<dbReference type="PDBsum" id="4Z3S"/>
<dbReference type="PDBsum" id="4Z8C"/>
<dbReference type="PDBsum" id="4ZER"/>
<dbReference type="PDBsum" id="4ZSN"/>
<dbReference type="PDBsum" id="5AA0"/>
<dbReference type="PDBsum" id="5BR8"/>
<dbReference type="PDBsum" id="5CZP"/>
<dbReference type="PDBsum" id="5D8B"/>
<dbReference type="PDBsum" id="5DFE"/>
<dbReference type="PDBsum" id="5DOX"/>
<dbReference type="PDBsum" id="5DOY"/>
<dbReference type="PDBsum" id="5E7K"/>
<dbReference type="PDBsum" id="5E81"/>
<dbReference type="PDBsum" id="5EL4"/>
<dbReference type="PDBsum" id="5EL5"/>
<dbReference type="PDBsum" id="5EL6"/>
<dbReference type="PDBsum" id="5EL7"/>
<dbReference type="PDBsum" id="5F8K"/>
<dbReference type="PDBsum" id="5FDU"/>
<dbReference type="PDBsum" id="5FDV"/>
<dbReference type="PDBsum" id="5HAU"/>
<dbReference type="PDBsum" id="5HCP"/>
<dbReference type="PDBsum" id="5HCQ"/>
<dbReference type="PDBsum" id="5HCR"/>
<dbReference type="PDBsum" id="5HD1"/>
<dbReference type="PDBsum" id="5IB7"/>
<dbReference type="PDBsum" id="5IB8"/>
<dbReference type="PDBsum" id="5IBB"/>
<dbReference type="PDBsum" id="5IWA"/>
<dbReference type="PDBsum" id="5J30"/>
<dbReference type="PDBsum" id="5J3C"/>
<dbReference type="PDBsum" id="5J4B"/>
<dbReference type="PDBsum" id="5J4C"/>
<dbReference type="PDBsum" id="5J8B"/>
<dbReference type="PDBsum" id="5LMN"/>
<dbReference type="PDBsum" id="5LMO"/>
<dbReference type="PDBsum" id="5LMP"/>
<dbReference type="PDBsum" id="5LMQ"/>
<dbReference type="PDBsum" id="5LMR"/>
<dbReference type="PDBsum" id="5LMS"/>
<dbReference type="PDBsum" id="5LMT"/>
<dbReference type="PDBsum" id="5LMU"/>
<dbReference type="PDBsum" id="5LMV"/>
<dbReference type="PDBsum" id="5NDJ"/>
<dbReference type="PDBsum" id="5NDK"/>
<dbReference type="PDBsum" id="5OT7"/>
<dbReference type="PDBsum" id="5UQ7"/>
<dbReference type="PDBsum" id="5UQ8"/>
<dbReference type="PDBsum" id="5VP2"/>
<dbReference type="PDBsum" id="5VPO"/>
<dbReference type="PDBsum" id="5VPP"/>
<dbReference type="PDBsum" id="5W4K"/>
<dbReference type="PDBsum" id="5WIS"/>
<dbReference type="PDBsum" id="5WIT"/>
<dbReference type="PDBsum" id="5WNP"/>
<dbReference type="PDBsum" id="5WNQ"/>
<dbReference type="PDBsum" id="5WNR"/>
<dbReference type="PDBsum" id="5WNS"/>
<dbReference type="PDBsum" id="5WNT"/>
<dbReference type="PDBsum" id="5WNU"/>
<dbReference type="PDBsum" id="5WNV"/>
<dbReference type="PDBsum" id="5ZLU"/>
<dbReference type="PDBsum" id="6BUW"/>
<dbReference type="PDBsum" id="6BZ6"/>
<dbReference type="PDBsum" id="6BZ7"/>
<dbReference type="PDBsum" id="6BZ8"/>
<dbReference type="PDBsum" id="6C5L"/>
<dbReference type="PDBsum" id="6CAE"/>
<dbReference type="PDBsum" id="6CAO"/>
<dbReference type="PDBsum" id="6CAP"/>
<dbReference type="PDBsum" id="6CAQ"/>
<dbReference type="PDBsum" id="6CAR"/>
<dbReference type="PDBsum" id="6CAS"/>
<dbReference type="PDBsum" id="6CFJ"/>
<dbReference type="PDBsum" id="6CFK"/>
<dbReference type="PDBsum" id="6CFL"/>
<dbReference type="PDBsum" id="6CZR"/>
<dbReference type="PDBsum" id="6DTI"/>
<dbReference type="PDBsum" id="6FKR"/>
<dbReference type="PDBsum" id="6GSJ"/>
<dbReference type="PDBsum" id="6GSK"/>
<dbReference type="PDBsum" id="6GSL"/>
<dbReference type="PDBsum" id="6GZQ"/>
<dbReference type="PDBsum" id="6GZX"/>
<dbReference type="PDBsum" id="6GZZ"/>
<dbReference type="PDBsum" id="6MKN"/>
<dbReference type="PDBsum" id="6MPF"/>
<dbReference type="PDBsum" id="6MPI"/>
<dbReference type="PDBsum" id="6N9E"/>
<dbReference type="PDBsum" id="6N9F"/>
<dbReference type="PDBsum" id="6ND5"/>
<dbReference type="PDBsum" id="6ND6"/>
<dbReference type="PDBsum" id="6NDK"/>
<dbReference type="PDBsum" id="6NSH"/>
<dbReference type="PDBsum" id="6NTA"/>
<dbReference type="PDBsum" id="6NUO"/>
<dbReference type="PDBsum" id="6NWY"/>
<dbReference type="PDBsum" id="6NY6"/>
<dbReference type="PDBsum" id="6O3M"/>
<dbReference type="PDBsum" id="6O97"/>
<dbReference type="PDBsum" id="6OF1"/>
<dbReference type="PDBsum" id="6OF6"/>
<dbReference type="PDBsum" id="6OJ2"/>
<dbReference type="PDBsum" id="6OPE"/>
<dbReference type="PDBsum" id="6ORD"/>
<dbReference type="PDBsum" id="6OSI"/>
<dbReference type="PDBsum" id="6OTR"/>
<dbReference type="PDBsum" id="6OXA"/>
<dbReference type="PDBsum" id="6OXI"/>
<dbReference type="PDBsum" id="6Q95"/>
<dbReference type="PDBsum" id="6QNQ"/>
<dbReference type="PDBsum" id="6QNR"/>
<dbReference type="PDBsum" id="6UCQ"/>
<dbReference type="PDBsum" id="6UO1"/>
<dbReference type="PDBsum" id="6XHV"/>
<dbReference type="PDBsum" id="6XHW"/>
<dbReference type="PDBsum" id="6XHX"/>
<dbReference type="PDBsum" id="6XHY"/>
<dbReference type="PDBsum" id="6XQD"/>
<dbReference type="PDBsum" id="6XQE"/>
<dbReference type="PDBsum" id="7AZO"/>
<dbReference type="PDBsum" id="7AZS"/>
<dbReference type="PDBsum" id="7DUG"/>
<dbReference type="PDBsum" id="7DUH"/>
<dbReference type="PDBsum" id="7DUI"/>
<dbReference type="PDBsum" id="7DUJ"/>
<dbReference type="PDBsum" id="7DUK"/>
<dbReference type="PDBsum" id="7DUL"/>
<dbReference type="PDBsum" id="7JQL"/>
<dbReference type="PDBsum" id="7JQM"/>
<dbReference type="PDBsum" id="7LH5"/>
<dbReference type="PDBsum" id="7MD7"/>
<dbReference type="PDBsum" id="7RQ8"/>
<dbReference type="PDBsum" id="7RQ9"/>
<dbReference type="PDBsum" id="7RQA"/>
<dbReference type="PDBsum" id="7RQB"/>
<dbReference type="PDBsum" id="7RQC"/>
<dbReference type="PDBsum" id="7RQD"/>
<dbReference type="PDBsum" id="7RQE"/>
<dbReference type="PDBsum" id="7U2H"/>
<dbReference type="PDBsum" id="7U2I"/>
<dbReference type="PDBsum" id="7U2J"/>
<dbReference type="PDBsum" id="7V2L"/>
<dbReference type="PDBsum" id="7V2M"/>
<dbReference type="PDBsum" id="7V2N"/>
<dbReference type="PDBsum" id="7V2O"/>
<dbReference type="PDBsum" id="7V2P"/>
<dbReference type="PDBsum" id="7V2Q"/>
<dbReference type="PDBsum" id="8CVJ"/>
<dbReference type="PDBsum" id="8CVK"/>
<dbReference type="PDBsum" id="8CVL"/>
<dbReference type="PDBsum" id="8EKB"/>
<dbReference type="PDBsum" id="8EV6"/>
<dbReference type="PDBsum" id="8EV7"/>
<dbReference type="PDBsum" id="8FC1"/>
<dbReference type="PDBsum" id="8FC2"/>
<dbReference type="PDBsum" id="8FC3"/>
<dbReference type="PDBsum" id="8FC4"/>
<dbReference type="PDBsum" id="8FC5"/>
<dbReference type="PDBsum" id="8FC6"/>
<dbReference type="PDBsum" id="8FOM"/>
<dbReference type="PDBsum" id="8FON"/>
<dbReference type="PDBsum" id="8G29"/>
<dbReference type="PDBsum" id="8G2A"/>
<dbReference type="PDBsum" id="8G2B"/>
<dbReference type="PDBsum" id="8G2C"/>
<dbReference type="PDBsum" id="8G2D"/>
<dbReference type="PDBsum" id="8T8B"/>
<dbReference type="PDBsum" id="8T8C"/>
<dbReference type="PDBsum" id="8UD6"/>
<dbReference type="PDBsum" id="8UD7"/>
<dbReference type="PDBsum" id="8UD8"/>
<dbReference type="PDBsum" id="8UVR"/>
<dbReference type="PDBsum" id="8UVS"/>
<dbReference type="PDBsum" id="8VTU"/>
<dbReference type="PDBsum" id="8VTV"/>
<dbReference type="PDBsum" id="8VTW"/>
<dbReference type="PDBsum" id="8VTX"/>
<dbReference type="PDBsum" id="8VTY"/>
<dbReference type="PDBsum" id="9B00"/>
<dbReference type="PDBsum" id="9D0J"/>
<dbReference type="PDBsum" id="9D7R"/>
<dbReference type="PDBsum" id="9D7S"/>
<dbReference type="PDBsum" id="9D7T"/>
<dbReference type="PDBsum" id="9DFC"/>
<dbReference type="PDBsum" id="9DFD"/>
<dbReference type="PDBsum" id="9DFE"/>
<dbReference type="EMDB" id="EMD-0101"/>
<dbReference type="EMDB" id="EMD-0104"/>
<dbReference type="EMDB" id="EMD-0105"/>
<dbReference type="EMDB" id="EMD-31655"/>
<dbReference type="EMDB" id="EMD-31656"/>
<dbReference type="EMDB" id="EMD-31657"/>
<dbReference type="EMDB" id="EMD-31658"/>
<dbReference type="EMDB" id="EMD-31659"/>
<dbReference type="EMDB" id="EMD-31660"/>
<dbReference type="EMDB" id="EMD-3852"/>
<dbReference type="EMDB" id="EMD-4073"/>
<dbReference type="EMDB" id="EMD-4074"/>
<dbReference type="EMDB" id="EMD-4075"/>
<dbReference type="EMDB" id="EMD-4076"/>
<dbReference type="EMDB" id="EMD-4077"/>
<dbReference type="EMDB" id="EMD-4078"/>
<dbReference type="EMDB" id="EMD-4079"/>
<dbReference type="EMDB" id="EMD-4080"/>
<dbReference type="EMDB" id="EMD-4083"/>
<dbReference type="EMDB" id="EMD-4475"/>
<dbReference type="EMDB" id="EMD-6934"/>
<dbReference type="EMDB" id="EMD-8596"/>
<dbReference type="EMDB" id="EMD-8597"/>
<dbReference type="SMR" id="Q5SLQ0"/>
<dbReference type="IntAct" id="Q5SLQ0">
    <property type="interactions" value="11"/>
</dbReference>
<dbReference type="DrugBank" id="DB08185">
    <property type="generic name" value="2-METHYLTHIO-N6-ISOPENTENYL-ADENOSINE-5'-MONOPHOSPHATE"/>
</dbReference>
<dbReference type="EnsemblBacteria" id="BAD70066">
    <property type="protein sequence ID" value="BAD70066"/>
    <property type="gene ID" value="BAD70066"/>
</dbReference>
<dbReference type="GeneID" id="3169870"/>
<dbReference type="KEGG" id="ttj:TTHA0243"/>
<dbReference type="PATRIC" id="fig|300852.9.peg.243"/>
<dbReference type="eggNOG" id="COG0238">
    <property type="taxonomic scope" value="Bacteria"/>
</dbReference>
<dbReference type="HOGENOM" id="CLU_148710_0_3_0"/>
<dbReference type="PhylomeDB" id="Q5SLQ0"/>
<dbReference type="EvolutionaryTrace" id="Q5SLQ0"/>
<dbReference type="Proteomes" id="UP000000532">
    <property type="component" value="Chromosome"/>
</dbReference>
<dbReference type="GO" id="GO:1990904">
    <property type="term" value="C:ribonucleoprotein complex"/>
    <property type="evidence" value="ECO:0007669"/>
    <property type="project" value="UniProtKB-KW"/>
</dbReference>
<dbReference type="GO" id="GO:0005840">
    <property type="term" value="C:ribosome"/>
    <property type="evidence" value="ECO:0007669"/>
    <property type="project" value="UniProtKB-KW"/>
</dbReference>
<dbReference type="GO" id="GO:0070181">
    <property type="term" value="F:small ribosomal subunit rRNA binding"/>
    <property type="evidence" value="ECO:0007669"/>
    <property type="project" value="TreeGrafter"/>
</dbReference>
<dbReference type="GO" id="GO:0003735">
    <property type="term" value="F:structural constituent of ribosome"/>
    <property type="evidence" value="ECO:0007669"/>
    <property type="project" value="InterPro"/>
</dbReference>
<dbReference type="GO" id="GO:0006412">
    <property type="term" value="P:translation"/>
    <property type="evidence" value="ECO:0007669"/>
    <property type="project" value="UniProtKB-UniRule"/>
</dbReference>
<dbReference type="FunFam" id="4.10.640.10:FF:000015">
    <property type="entry name" value="30S ribosomal protein S18"/>
    <property type="match status" value="1"/>
</dbReference>
<dbReference type="Gene3D" id="4.10.640.10">
    <property type="entry name" value="Ribosomal protein S18"/>
    <property type="match status" value="1"/>
</dbReference>
<dbReference type="HAMAP" id="MF_00270">
    <property type="entry name" value="Ribosomal_bS18"/>
    <property type="match status" value="1"/>
</dbReference>
<dbReference type="InterPro" id="IPR001648">
    <property type="entry name" value="Ribosomal_bS18"/>
</dbReference>
<dbReference type="InterPro" id="IPR018275">
    <property type="entry name" value="Ribosomal_bS18_CS"/>
</dbReference>
<dbReference type="InterPro" id="IPR036870">
    <property type="entry name" value="Ribosomal_bS18_sf"/>
</dbReference>
<dbReference type="NCBIfam" id="TIGR00165">
    <property type="entry name" value="S18"/>
    <property type="match status" value="1"/>
</dbReference>
<dbReference type="PANTHER" id="PTHR13479">
    <property type="entry name" value="30S RIBOSOMAL PROTEIN S18"/>
    <property type="match status" value="1"/>
</dbReference>
<dbReference type="PANTHER" id="PTHR13479:SF40">
    <property type="entry name" value="SMALL RIBOSOMAL SUBUNIT PROTEIN BS18M"/>
    <property type="match status" value="1"/>
</dbReference>
<dbReference type="Pfam" id="PF01084">
    <property type="entry name" value="Ribosomal_S18"/>
    <property type="match status" value="1"/>
</dbReference>
<dbReference type="PRINTS" id="PR00974">
    <property type="entry name" value="RIBOSOMALS18"/>
</dbReference>
<dbReference type="SUPFAM" id="SSF46911">
    <property type="entry name" value="Ribosomal protein S18"/>
    <property type="match status" value="1"/>
</dbReference>
<dbReference type="PROSITE" id="PS00057">
    <property type="entry name" value="RIBOSOMAL_S18"/>
    <property type="match status" value="1"/>
</dbReference>
<gene>
    <name type="primary">rpsR</name>
    <name type="ordered locus">TTHA0243</name>
</gene>
<organism>
    <name type="scientific">Thermus thermophilus (strain ATCC 27634 / DSM 579 / HB8)</name>
    <dbReference type="NCBI Taxonomy" id="300852"/>
    <lineage>
        <taxon>Bacteria</taxon>
        <taxon>Thermotogati</taxon>
        <taxon>Deinococcota</taxon>
        <taxon>Deinococci</taxon>
        <taxon>Thermales</taxon>
        <taxon>Thermaceae</taxon>
        <taxon>Thermus</taxon>
    </lineage>
</organism>
<sequence>MSTKNAKPKKEAQRRPSRKAKVKATLGEFDLRDYRNVEVLKRFLSETGKILPRRRTGLSAKEQRILAKTIKRARILGLLPFTEKLVRK</sequence>
<accession>Q5SLQ0</accession>
<reference key="1">
    <citation type="submission" date="2004-11" db="EMBL/GenBank/DDBJ databases">
        <title>Complete genome sequence of Thermus thermophilus HB8.</title>
        <authorList>
            <person name="Masui R."/>
            <person name="Kurokawa K."/>
            <person name="Nakagawa N."/>
            <person name="Tokunaga F."/>
            <person name="Koyama Y."/>
            <person name="Shibata T."/>
            <person name="Oshima T."/>
            <person name="Yokoyama S."/>
            <person name="Yasunaga T."/>
            <person name="Kuramitsu S."/>
        </authorList>
    </citation>
    <scope>NUCLEOTIDE SEQUENCE [LARGE SCALE GENOMIC DNA]</scope>
    <source>
        <strain>ATCC 27634 / DSM 579 / HB8</strain>
    </source>
</reference>
<reference key="2">
    <citation type="journal article" date="1994" name="Eur. J. Biochem.">
        <title>Purification and characterization of the 30S ribosomal proteins from the bacterium Thermus thermophilus.</title>
        <authorList>
            <person name="Tsiboli P."/>
            <person name="Herfurth E."/>
            <person name="Choli T."/>
        </authorList>
    </citation>
    <scope>PROTEIN SEQUENCE OF 2-26</scope>
</reference>
<reference key="3">
    <citation type="journal article" date="2005" name="Proteomics">
        <title>Extending ribosomal protein identifications to unsequenced bacterial strains using matrix-assisted laser desorption/ionization mass spectrometry.</title>
        <authorList>
            <person name="Suh M.-J."/>
            <person name="Hamburg D.M."/>
            <person name="Gregory S.T."/>
            <person name="Dahlberg A.E."/>
            <person name="Limbach P.A."/>
        </authorList>
    </citation>
    <scope>MASS SPECTROMETRY</scope>
    <source>
        <strain>ATCC 27634 / DSM 579 / HB8</strain>
    </source>
</reference>
<reference key="4">
    <citation type="journal article" date="2000" name="Nature">
        <title>Structure of the 30S ribosomal subunit.</title>
        <authorList>
            <person name="Wimberly B.T."/>
            <person name="Brodersen D.E."/>
            <person name="Clemons W.M. Jr."/>
            <person name="Morgan-Warren R.J."/>
            <person name="Carter A.P."/>
            <person name="Vonrhein C."/>
            <person name="Hartsch T."/>
            <person name="Ramakrishnan V."/>
        </authorList>
    </citation>
    <scope>X-RAY CRYSTALLOGRAPHY (3.05 ANGSTROMS) OF THE 30S SUBUNIT</scope>
</reference>
<reference key="5">
    <citation type="journal article" date="2000" name="Cell">
        <title>Structure of functionally activated small ribosomal subunit at 3.3 A resolution.</title>
        <authorList>
            <person name="Schluenzen F."/>
            <person name="Tocilj A."/>
            <person name="Zarivach R."/>
            <person name="Harms J."/>
            <person name="Gluehmann M."/>
            <person name="Janell D."/>
            <person name="Bashan A."/>
            <person name="Bartels H."/>
            <person name="Agmon I."/>
            <person name="Franceschi F."/>
            <person name="Yonath A."/>
        </authorList>
    </citation>
    <scope>X-RAY CRYSTALLOGRAPHY (3.3 ANGSTROMS) OF THE 30S SUBUNIT</scope>
</reference>
<reference key="6">
    <citation type="journal article" date="2000" name="Cell">
        <title>The structural basis for the action of the antibiotics tetracycline, pactamycin, and hygromycin B on the 30S ribosomal subunit.</title>
        <authorList>
            <person name="Brodersen D.E."/>
            <person name="Clemons W.M. Jr."/>
            <person name="Carter A.P."/>
            <person name="Morgan-Warren R.J."/>
            <person name="Wimberly B.T."/>
            <person name="Ramakrishnan V."/>
        </authorList>
    </citation>
    <scope>X-RAY CRYSTALLOGRAPHY (3.3 ANGSTROMS) OF THE 30S SUBUNIT</scope>
</reference>
<reference key="7">
    <citation type="journal article" date="2000" name="Nature">
        <title>Functional insights from the structure of the 30S ribosomal subunit and its interactions with antibiotics.</title>
        <authorList>
            <person name="Carter A.P."/>
            <person name="Clemons W.M. Jr."/>
            <person name="Brodersen D.E."/>
            <person name="Morgan-Warren R.J."/>
            <person name="Wimberly B.T."/>
            <person name="Ramakrishnan V."/>
        </authorList>
    </citation>
    <scope>X-RAY CRYSTALLOGRAPHY (3.0 ANGSTROMS) OF THE 30S SUBUNIT</scope>
</reference>
<reference key="8">
    <citation type="journal article" date="2000" name="Science">
        <title>Structure of the S15,S6,S18-rRNA complex: assembly of the 30S ribosome central domain.</title>
        <authorList>
            <person name="Agalarov S.C."/>
            <person name="Prasad G.S."/>
            <person name="Funke P.M."/>
            <person name="Stout C.D."/>
            <person name="Williamson J.R."/>
        </authorList>
    </citation>
    <scope>X-RAY CRYSTALLOGRAPHY (2.6 ANGSTROMS) OF A 30S SUBUNIT FRAGMENT</scope>
</reference>
<reference key="9">
    <citation type="journal article" date="2001" name="Cell">
        <title>The path of messenger RNA through the ribosome.</title>
        <authorList>
            <person name="Yusupova G.Z."/>
            <person name="Yusupov M.M."/>
            <person name="Cate J.H.D."/>
            <person name="Noller H.F."/>
        </authorList>
    </citation>
    <scope>X-RAY CRYSTALLOGRAPHY (5.0 ANGSTROMS) OF THE RIBOSOME</scope>
</reference>
<reference key="10">
    <citation type="journal article" date="2001" name="EMBO J.">
        <title>Crystal structures of complexes of the small ribosomal subunit with tetracycline, edeine and IF3.</title>
        <authorList>
            <person name="Pioletti M."/>
            <person name="Schluenzen F."/>
            <person name="Harms J."/>
            <person name="Zarivach R."/>
            <person name="Gluehmann M."/>
            <person name="Avila H."/>
            <person name="Bashan A."/>
            <person name="Bartels H."/>
            <person name="Auerbach T."/>
            <person name="Jacobi C."/>
            <person name="Hartsch T."/>
            <person name="Yonath A."/>
            <person name="Franceschi F."/>
        </authorList>
    </citation>
    <scope>X-RAY CRYSTALLOGRAPHY (3.2 ANGSTROMS) OF THE 30S SUBUNIT</scope>
</reference>
<reference key="11">
    <citation type="journal article" date="2001" name="Science">
        <title>Crystal structure of an initiation factor bound to the 30S ribosomal subunit.</title>
        <authorList>
            <person name="Carter A.P."/>
            <person name="Clemons W.M. Jr."/>
            <person name="Brodersen D.E."/>
            <person name="Morgan-Warren R.J."/>
            <person name="Hartsch T."/>
            <person name="Wimberly B.T."/>
            <person name="Ramakrishnan V."/>
        </authorList>
    </citation>
    <scope>X-RAY CRYSTALLOGRAPHY (3.2 ANGSTROMS) OF THE 30S SUBUNIT</scope>
</reference>
<reference key="12">
    <citation type="journal article" date="2001" name="Science">
        <title>Crystal structure of the ribosome at 5.5 A resolution.</title>
        <authorList>
            <person name="Yusupov M.M."/>
            <person name="Yusupova G.Z."/>
            <person name="Baucom A."/>
            <person name="Lieberman K."/>
            <person name="Earnest T.N."/>
            <person name="Cate J.H.D."/>
            <person name="Noller H.F."/>
        </authorList>
    </citation>
    <scope>X-RAY CRYSTALLOGRAPHY (5.5 ANGSTROMS) OF THE RIBOSOME</scope>
</reference>
<reference key="13">
    <citation type="journal article" date="2001" name="Science">
        <title>Recognition of cognate transfer RNA by the 30S ribosomal subunit.</title>
        <authorList>
            <person name="Ogle J.M."/>
            <person name="Brodersen D.E."/>
            <person name="Clemons W.M. Jr."/>
            <person name="Tarry M.J."/>
            <person name="Carter A.P."/>
            <person name="Ramakrishnan V."/>
        </authorList>
    </citation>
    <scope>X-RAY CRYSTALLOGRAPHY (3.11 ANGSTROMS) OF THE 30S SUBUNIT</scope>
</reference>
<reference key="14">
    <citation type="journal article" date="2002" name="J. Mol. Biol.">
        <title>Crystal structure of the 30S ribosomal subunit from Thermus thermophilus: structure of the proteins and their interactions with 16S RNA.</title>
        <authorList>
            <person name="Brodersen D.E."/>
            <person name="Clemons W.M. Jr."/>
            <person name="Carter A.P."/>
            <person name="Wimberly B.T."/>
            <person name="Ramakrishnan V."/>
        </authorList>
    </citation>
    <scope>X-RAY CRYSTALLOGRAPHY (3.05 ANGSTROMS) OF THE 30S SUBUNIT</scope>
</reference>
<reference key="15">
    <citation type="journal article" date="2005" name="Mol. Cell">
        <title>Interaction of Era with the 30S ribosomal subunit implications for 30S subunit assembly.</title>
        <authorList>
            <person name="Sharma M.R."/>
            <person name="Barat C."/>
            <person name="Wilson D.N."/>
            <person name="Booth T.M."/>
            <person name="Kawazoe M."/>
            <person name="Hori-Takemoto C."/>
            <person name="Shirouzu M."/>
            <person name="Yokoyama S."/>
            <person name="Fucini P."/>
            <person name="Agrawal R.K."/>
        </authorList>
    </citation>
    <scope>STRUCTURE BY ELECTRON MICROSCOPY (13.50 ANGSTROMS)</scope>
    <scope>INTERACTION WITH ERA</scope>
</reference>
<reference key="16">
    <citation type="journal article" date="2005" name="Cell">
        <title>Crystal structures of the ribosome in complex with release factors RF1 and RF2 bound to a cognate stop codon.</title>
        <authorList>
            <person name="Petry S."/>
            <person name="Brodersen D.E."/>
            <person name="Murphy F.V."/>
            <person name="Dunham C.M."/>
            <person name="Selmer M."/>
            <person name="Tarry M.J."/>
            <person name="Kelley A.C."/>
            <person name="Ramakrishnan V."/>
        </authorList>
    </citation>
    <scope>X-RAY CRYSTALLOGRAPHY (5.90 ANGSTROMS) OF 70S RIBOSOME IN COMPLEX WITH RF1 OR RF2</scope>
    <scope>SUBUNIT</scope>
</reference>
<reference key="17">
    <citation type="journal article" date="2008" name="Science">
        <title>Insights into translational termination from the structure of RF2 bound to the ribosome.</title>
        <authorList>
            <person name="Weixlbaumer A."/>
            <person name="Jin H."/>
            <person name="Neubauer C."/>
            <person name="Voorhees R.M."/>
            <person name="Petry S."/>
            <person name="Kelley A.C."/>
            <person name="Ramakrishnan V."/>
        </authorList>
    </citation>
    <scope>X-RAY CRYSTALLOGRAPHY (3.45 ANGSTROMS) OF 70S RIBOSOME IN COMPLEX WITH RF2</scope>
    <scope>SUBUNIT</scope>
</reference>
<reference key="18">
    <citation type="journal article" date="2010" name="Proc. Natl. Acad. Sci. U.S.A.">
        <title>Structure of the 70S ribosome bound to release factor 2 and a substrate analog provides insights into catalysis of peptide release.</title>
        <authorList>
            <person name="Jin H."/>
            <person name="Kelley A.C."/>
            <person name="Loakes D."/>
            <person name="Ramakrishnan V."/>
        </authorList>
    </citation>
    <scope>X-RAY CRYSTALLOGRAPHY (3.10 ANGSTROMS) OF 70S RIBOSOME IN COMPLEX WITH RF2</scope>
    <scope>SUBUNIT</scope>
</reference>
<name>RS18_THET8</name>
<protein>
    <recommendedName>
        <fullName evidence="5">Small ribosomal subunit protein bS18</fullName>
    </recommendedName>
    <alternativeName>
        <fullName>30S ribosomal protein S18</fullName>
    </alternativeName>
</protein>
<feature type="initiator methionine" description="Removed" evidence="4">
    <location>
        <position position="1"/>
    </location>
</feature>
<feature type="chain" id="PRO_0000111250" description="Small ribosomal subunit protein bS18">
    <location>
        <begin position="2"/>
        <end position="88"/>
    </location>
</feature>
<feature type="region of interest" description="Disordered" evidence="1">
    <location>
        <begin position="1"/>
        <end position="22"/>
    </location>
</feature>
<feature type="sequence conflict" description="In Ref. 2; AA sequence." evidence="5" ref="2">
    <original>S</original>
    <variation>T</variation>
    <location>
        <position position="17"/>
    </location>
</feature>
<feature type="turn" evidence="9">
    <location>
        <begin position="22"/>
        <end position="24"/>
    </location>
</feature>
<feature type="strand" evidence="10">
    <location>
        <begin position="28"/>
        <end position="30"/>
    </location>
</feature>
<feature type="helix" evidence="7">
    <location>
        <begin position="37"/>
        <end position="42"/>
    </location>
</feature>
<feature type="strand" evidence="9">
    <location>
        <begin position="46"/>
        <end position="48"/>
    </location>
</feature>
<feature type="helix" evidence="9">
    <location>
        <begin position="53"/>
        <end position="56"/>
    </location>
</feature>
<feature type="strand" evidence="6">
    <location>
        <begin position="59"/>
        <end position="61"/>
    </location>
</feature>
<feature type="helix" evidence="7">
    <location>
        <begin position="62"/>
        <end position="76"/>
    </location>
</feature>
<feature type="strand" evidence="8">
    <location>
        <begin position="77"/>
        <end position="79"/>
    </location>
</feature>
<feature type="strand" evidence="11">
    <location>
        <begin position="85"/>
        <end position="87"/>
    </location>
</feature>
<evidence type="ECO:0000256" key="1">
    <source>
        <dbReference type="SAM" id="MobiDB-lite"/>
    </source>
</evidence>
<evidence type="ECO:0000269" key="2">
    <source>
    </source>
</evidence>
<evidence type="ECO:0000269" key="3">
    <source>
    </source>
</evidence>
<evidence type="ECO:0000269" key="4">
    <source>
    </source>
</evidence>
<evidence type="ECO:0000305" key="5"/>
<evidence type="ECO:0007829" key="6">
    <source>
        <dbReference type="PDB" id="1FKA"/>
    </source>
</evidence>
<evidence type="ECO:0007829" key="7">
    <source>
        <dbReference type="PDB" id="1G1X"/>
    </source>
</evidence>
<evidence type="ECO:0007829" key="8">
    <source>
        <dbReference type="PDB" id="2UU9"/>
    </source>
</evidence>
<evidence type="ECO:0007829" key="9">
    <source>
        <dbReference type="PDB" id="2UUB"/>
    </source>
</evidence>
<evidence type="ECO:0007829" key="10">
    <source>
        <dbReference type="PDB" id="2UXC"/>
    </source>
</evidence>
<evidence type="ECO:0007829" key="11">
    <source>
        <dbReference type="PDB" id="3T1H"/>
    </source>
</evidence>
<comment type="function">
    <text>Located on the back of the platform of the 30S subunit where it stabilizes the close packing of several RNA helices of the 16S rRNA. Forms part of the Shine-Dalgarno cleft in the 70S ribosome, where it probably interacts with the Shine-Dalgarno helix.</text>
</comment>
<comment type="subunit">
    <text evidence="2">Part of the 30S ribosomal subunit. Forms a tight heterodimer with protein bS6, also interacts with protein uS11. Binds to the C-terminus of IF3 and to the central section of Era.</text>
</comment>
<comment type="mass spectrometry"/>
<comment type="similarity">
    <text evidence="5">Belongs to the bacterial ribosomal protein bS18 family.</text>
</comment>
<proteinExistence type="evidence at protein level"/>